<keyword id="KW-0002">3D-structure</keyword>
<keyword id="KW-0021">Allosteric enzyme</keyword>
<keyword id="KW-0025">Alternative splicing</keyword>
<keyword id="KW-0028">Amino-acid biosynthesis</keyword>
<keyword id="KW-0129">CBS domain</keyword>
<keyword id="KW-0198">Cysteine biosynthesis</keyword>
<keyword id="KW-0963">Cytoplasm</keyword>
<keyword id="KW-0225">Disease variant</keyword>
<keyword id="KW-0349">Heme</keyword>
<keyword id="KW-0408">Iron</keyword>
<keyword id="KW-1017">Isopeptide bond</keyword>
<keyword id="KW-0456">Lyase</keyword>
<keyword id="KW-0479">Metal-binding</keyword>
<keyword id="KW-0539">Nucleus</keyword>
<keyword id="KW-0597">Phosphoprotein</keyword>
<keyword id="KW-1267">Proteomics identification</keyword>
<keyword id="KW-0663">Pyridoxal phosphate</keyword>
<keyword id="KW-1185">Reference proteome</keyword>
<keyword id="KW-0832">Ubl conjugation</keyword>
<sequence length="551" mass="60587">MPSETPQAEVGPTGCPHRSGPHSAKGSLEKGSPEDKEAKEPLWIRPDAPSRCTWQLGRPASESPHHHTAPAKSPKILPDILKKIGDTPMVRINKIGKKFGLKCELLAKCEFFNAGGSVKDRISLRMIEDAERDGTLKPGDTIIEPTSGNTGIGLALAAAVRGYRCIIVMPEKMSSEKVDVLRALGAEIVRTPTNARFDSPESHVGVAWRLKNEIPNSHILDQYRNASNPLAHYDTTADEILQQCDGKLDMLVASVGTGGTITGIARKLKEKCPGCRIIGVDPEGSILAEPEELNQTEQTTYEVEGIGYDFIPTVLDRTVVDKWFKSNDEEAFTFARMLIAQEGLLCGGSAGSTVAVAVKAAQELQEGQRCVVILPDSVRNYMTKFLSDRWMLQKGFLKEEDLTEKKPWWWHLRVQELGLSAPLTVLPTITCGHTIEILREKGFDQAPVVDEAGVILGMVTLGNMLSSLLAGKVQPSDQVGKVIYKQFKQIRLTDTLGRLSHILEMDHFALVVHEQIQYHSTGKSSQRQMVFGVVTAIDLLNFVAAQERDQK</sequence>
<evidence type="ECO:0000250" key="1">
    <source>
        <dbReference type="UniProtKB" id="P32232"/>
    </source>
</evidence>
<evidence type="ECO:0000255" key="2">
    <source>
        <dbReference type="PROSITE-ProRule" id="PRU00703"/>
    </source>
</evidence>
<evidence type="ECO:0000256" key="3">
    <source>
        <dbReference type="SAM" id="MobiDB-lite"/>
    </source>
</evidence>
<evidence type="ECO:0000269" key="4">
    <source>
    </source>
</evidence>
<evidence type="ECO:0000269" key="5">
    <source>
    </source>
</evidence>
<evidence type="ECO:0000269" key="6">
    <source>
    </source>
</evidence>
<evidence type="ECO:0000269" key="7">
    <source>
    </source>
</evidence>
<evidence type="ECO:0000269" key="8">
    <source>
    </source>
</evidence>
<evidence type="ECO:0000269" key="9">
    <source>
    </source>
</evidence>
<evidence type="ECO:0000269" key="10">
    <source>
    </source>
</evidence>
<evidence type="ECO:0000269" key="11">
    <source>
    </source>
</evidence>
<evidence type="ECO:0000269" key="12">
    <source>
    </source>
</evidence>
<evidence type="ECO:0000269" key="13">
    <source>
    </source>
</evidence>
<evidence type="ECO:0000269" key="14">
    <source>
    </source>
</evidence>
<evidence type="ECO:0000269" key="15">
    <source>
    </source>
</evidence>
<evidence type="ECO:0000269" key="16">
    <source>
    </source>
</evidence>
<evidence type="ECO:0000269" key="17">
    <source>
    </source>
</evidence>
<evidence type="ECO:0000269" key="18">
    <source>
    </source>
</evidence>
<evidence type="ECO:0000269" key="19">
    <source>
    </source>
</evidence>
<evidence type="ECO:0000269" key="20">
    <source>
    </source>
</evidence>
<evidence type="ECO:0000269" key="21">
    <source>
    </source>
</evidence>
<evidence type="ECO:0000269" key="22">
    <source>
    </source>
</evidence>
<evidence type="ECO:0000269" key="23">
    <source>
    </source>
</evidence>
<evidence type="ECO:0000269" key="24">
    <source>
    </source>
</evidence>
<evidence type="ECO:0000269" key="25">
    <source>
    </source>
</evidence>
<evidence type="ECO:0000269" key="26">
    <source>
    </source>
</evidence>
<evidence type="ECO:0000269" key="27">
    <source>
    </source>
</evidence>
<evidence type="ECO:0000269" key="28">
    <source>
    </source>
</evidence>
<evidence type="ECO:0000269" key="29">
    <source>
    </source>
</evidence>
<evidence type="ECO:0000269" key="30">
    <source>
    </source>
</evidence>
<evidence type="ECO:0000269" key="31">
    <source>
    </source>
</evidence>
<evidence type="ECO:0000269" key="32">
    <source>
    </source>
</evidence>
<evidence type="ECO:0000269" key="33">
    <source>
    </source>
</evidence>
<evidence type="ECO:0000269" key="34">
    <source>
    </source>
</evidence>
<evidence type="ECO:0000269" key="35">
    <source>
    </source>
</evidence>
<evidence type="ECO:0000269" key="36">
    <source>
    </source>
</evidence>
<evidence type="ECO:0000269" key="37">
    <source>
    </source>
</evidence>
<evidence type="ECO:0000269" key="38">
    <source>
    </source>
</evidence>
<evidence type="ECO:0000269" key="39">
    <source>
    </source>
</evidence>
<evidence type="ECO:0000269" key="40">
    <source>
    </source>
</evidence>
<evidence type="ECO:0000269" key="41">
    <source>
    </source>
</evidence>
<evidence type="ECO:0000269" key="42">
    <source>
    </source>
</evidence>
<evidence type="ECO:0000269" key="43">
    <source>
    </source>
</evidence>
<evidence type="ECO:0000269" key="44">
    <source>
    </source>
</evidence>
<evidence type="ECO:0000269" key="45">
    <source>
    </source>
</evidence>
<evidence type="ECO:0000269" key="46">
    <source>
    </source>
</evidence>
<evidence type="ECO:0000269" key="47">
    <source>
    </source>
</evidence>
<evidence type="ECO:0000305" key="48"/>
<evidence type="ECO:0007744" key="49">
    <source>
    </source>
</evidence>
<evidence type="ECO:0007744" key="50">
    <source>
    </source>
</evidence>
<evidence type="ECO:0007829" key="51">
    <source>
        <dbReference type="PDB" id="1M54"/>
    </source>
</evidence>
<evidence type="ECO:0007829" key="52">
    <source>
        <dbReference type="PDB" id="4COO"/>
    </source>
</evidence>
<evidence type="ECO:0007829" key="53">
    <source>
        <dbReference type="PDB" id="4L0D"/>
    </source>
</evidence>
<evidence type="ECO:0007829" key="54">
    <source>
        <dbReference type="PDB" id="4L28"/>
    </source>
</evidence>
<evidence type="ECO:0007829" key="55">
    <source>
        <dbReference type="PDB" id="4UUU"/>
    </source>
</evidence>
<evidence type="ECO:0007829" key="56">
    <source>
        <dbReference type="PDB" id="5MMS"/>
    </source>
</evidence>
<evidence type="ECO:0007829" key="57">
    <source>
        <dbReference type="PDB" id="8STW"/>
    </source>
</evidence>
<name>CBS_HUMAN</name>
<gene>
    <name type="primary">CBS</name>
</gene>
<accession>P35520</accession>
<accession>B2R993</accession>
<accession>D3DSK4</accession>
<accession>Q99425</accession>
<accession>Q9BWC5</accession>
<proteinExistence type="evidence at protein level"/>
<reference key="1">
    <citation type="journal article" date="1993" name="Hum. Mol. Genet.">
        <title>Human cystathionine beta-synthase cDNA: sequence, alternative splicing and expression in cultured cells.</title>
        <authorList>
            <person name="Kraus J.P."/>
            <person name="Le K."/>
            <person name="Swaroop M."/>
            <person name="Ohura T."/>
            <person name="Tahara T."/>
            <person name="Rosenberg L.E."/>
            <person name="Roper M.D."/>
            <person name="Kozich V."/>
        </authorList>
    </citation>
    <scope>NUCLEOTIDE SEQUENCE [MRNA] (ISOFORM 1)</scope>
    <source>
        <tissue>Liver</tissue>
    </source>
</reference>
<reference key="2">
    <citation type="journal article" date="1995" name="Biochem. Biophys. Res. Commun.">
        <title>Genomic organization of the human cystathionine beta-synthase gene: evidence for various cDNAs.</title>
        <authorList>
            <person name="Chasse J.-F."/>
            <person name="Paly E."/>
            <person name="Paris D."/>
            <person name="Paul V."/>
            <person name="Sinet P.-M."/>
            <person name="Kamoun P."/>
            <person name="London J."/>
        </authorList>
    </citation>
    <scope>NUCLEOTIDE SEQUENCE [MRNA] (ISOFORM 1)</scope>
    <source>
        <tissue>Liver</tissue>
    </source>
</reference>
<reference key="3">
    <citation type="journal article" date="1994" name="Proc. Natl. Acad. Sci. U.S.A.">
        <title>A yeast system for expression of human cystathionine beta-synthase: structural and functional conservation of the human and yeast genes.</title>
        <authorList>
            <person name="Kruger W.D."/>
            <person name="Cox D.R."/>
        </authorList>
    </citation>
    <scope>NUCLEOTIDE SEQUENCE [MRNA] (ISOFORM 1)</scope>
</reference>
<reference key="4">
    <citation type="journal article" date="1997" name="Mamm. Genome">
        <title>Human cystathionine beta-synthase: gene organization and expression of different 5' alternative splicing.</title>
        <authorList>
            <person name="Chasse J.-F."/>
            <person name="Paul V."/>
            <person name="Escanez R."/>
            <person name="Kamoun P."/>
            <person name="London J."/>
        </authorList>
    </citation>
    <scope>NUCLEOTIDE SEQUENCE [GENOMIC DNA]</scope>
</reference>
<reference key="5">
    <citation type="journal article" date="1998" name="Genomics">
        <title>The human cystathionine beta-synthase (CBS) gene: complete sequence, alternative splicing, and polymorphisms.</title>
        <authorList>
            <person name="Kraus J.P."/>
            <person name="Oliveriusova J."/>
            <person name="Sokolova J."/>
            <person name="Kraus E."/>
            <person name="Vlcek C."/>
            <person name="de Franchis R."/>
            <person name="Maclean K.N."/>
            <person name="Bao L."/>
            <person name="Bukovska G."/>
            <person name="Patterson D."/>
            <person name="Paces V."/>
            <person name="Ansorge W."/>
            <person name="Kozich V."/>
        </authorList>
    </citation>
    <scope>NUCLEOTIDE SEQUENCE [GENOMIC DNA]</scope>
    <scope>ALTERNATIVE SPLICING</scope>
</reference>
<reference key="6">
    <citation type="submission" date="2003-05" db="EMBL/GenBank/DDBJ databases">
        <title>Cloning of human full-length CDSs in BD Creator(TM) system donor vector.</title>
        <authorList>
            <person name="Kalnine N."/>
            <person name="Chen X."/>
            <person name="Rolfs A."/>
            <person name="Halleck A."/>
            <person name="Hines L."/>
            <person name="Eisenstein S."/>
            <person name="Koundinya M."/>
            <person name="Raphael J."/>
            <person name="Moreira D."/>
            <person name="Kelley T."/>
            <person name="LaBaer J."/>
            <person name="Lin Y."/>
            <person name="Phelan M."/>
            <person name="Farmer A."/>
        </authorList>
    </citation>
    <scope>NUCLEOTIDE SEQUENCE [LARGE SCALE MRNA] (ISOFORM 1)</scope>
</reference>
<reference key="7">
    <citation type="journal article" date="2004" name="Nat. Genet.">
        <title>Complete sequencing and characterization of 21,243 full-length human cDNAs.</title>
        <authorList>
            <person name="Ota T."/>
            <person name="Suzuki Y."/>
            <person name="Nishikawa T."/>
            <person name="Otsuki T."/>
            <person name="Sugiyama T."/>
            <person name="Irie R."/>
            <person name="Wakamatsu A."/>
            <person name="Hayashi K."/>
            <person name="Sato H."/>
            <person name="Nagai K."/>
            <person name="Kimura K."/>
            <person name="Makita H."/>
            <person name="Sekine M."/>
            <person name="Obayashi M."/>
            <person name="Nishi T."/>
            <person name="Shibahara T."/>
            <person name="Tanaka T."/>
            <person name="Ishii S."/>
            <person name="Yamamoto J."/>
            <person name="Saito K."/>
            <person name="Kawai Y."/>
            <person name="Isono Y."/>
            <person name="Nakamura Y."/>
            <person name="Nagahari K."/>
            <person name="Murakami K."/>
            <person name="Yasuda T."/>
            <person name="Iwayanagi T."/>
            <person name="Wagatsuma M."/>
            <person name="Shiratori A."/>
            <person name="Sudo H."/>
            <person name="Hosoiri T."/>
            <person name="Kaku Y."/>
            <person name="Kodaira H."/>
            <person name="Kondo H."/>
            <person name="Sugawara M."/>
            <person name="Takahashi M."/>
            <person name="Kanda K."/>
            <person name="Yokoi T."/>
            <person name="Furuya T."/>
            <person name="Kikkawa E."/>
            <person name="Omura Y."/>
            <person name="Abe K."/>
            <person name="Kamihara K."/>
            <person name="Katsuta N."/>
            <person name="Sato K."/>
            <person name="Tanikawa M."/>
            <person name="Yamazaki M."/>
            <person name="Ninomiya K."/>
            <person name="Ishibashi T."/>
            <person name="Yamashita H."/>
            <person name="Murakawa K."/>
            <person name="Fujimori K."/>
            <person name="Tanai H."/>
            <person name="Kimata M."/>
            <person name="Watanabe M."/>
            <person name="Hiraoka S."/>
            <person name="Chiba Y."/>
            <person name="Ishida S."/>
            <person name="Ono Y."/>
            <person name="Takiguchi S."/>
            <person name="Watanabe S."/>
            <person name="Yosida M."/>
            <person name="Hotuta T."/>
            <person name="Kusano J."/>
            <person name="Kanehori K."/>
            <person name="Takahashi-Fujii A."/>
            <person name="Hara H."/>
            <person name="Tanase T.-O."/>
            <person name="Nomura Y."/>
            <person name="Togiya S."/>
            <person name="Komai F."/>
            <person name="Hara R."/>
            <person name="Takeuchi K."/>
            <person name="Arita M."/>
            <person name="Imose N."/>
            <person name="Musashino K."/>
            <person name="Yuuki H."/>
            <person name="Oshima A."/>
            <person name="Sasaki N."/>
            <person name="Aotsuka S."/>
            <person name="Yoshikawa Y."/>
            <person name="Matsunawa H."/>
            <person name="Ichihara T."/>
            <person name="Shiohata N."/>
            <person name="Sano S."/>
            <person name="Moriya S."/>
            <person name="Momiyama H."/>
            <person name="Satoh N."/>
            <person name="Takami S."/>
            <person name="Terashima Y."/>
            <person name="Suzuki O."/>
            <person name="Nakagawa S."/>
            <person name="Senoh A."/>
            <person name="Mizoguchi H."/>
            <person name="Goto Y."/>
            <person name="Shimizu F."/>
            <person name="Wakebe H."/>
            <person name="Hishigaki H."/>
            <person name="Watanabe T."/>
            <person name="Sugiyama A."/>
            <person name="Takemoto M."/>
            <person name="Kawakami B."/>
            <person name="Yamazaki M."/>
            <person name="Watanabe K."/>
            <person name="Kumagai A."/>
            <person name="Itakura S."/>
            <person name="Fukuzumi Y."/>
            <person name="Fujimori Y."/>
            <person name="Komiyama M."/>
            <person name="Tashiro H."/>
            <person name="Tanigami A."/>
            <person name="Fujiwara T."/>
            <person name="Ono T."/>
            <person name="Yamada K."/>
            <person name="Fujii Y."/>
            <person name="Ozaki K."/>
            <person name="Hirao M."/>
            <person name="Ohmori Y."/>
            <person name="Kawabata A."/>
            <person name="Hikiji T."/>
            <person name="Kobatake N."/>
            <person name="Inagaki H."/>
            <person name="Ikema Y."/>
            <person name="Okamoto S."/>
            <person name="Okitani R."/>
            <person name="Kawakami T."/>
            <person name="Noguchi S."/>
            <person name="Itoh T."/>
            <person name="Shigeta K."/>
            <person name="Senba T."/>
            <person name="Matsumura K."/>
            <person name="Nakajima Y."/>
            <person name="Mizuno T."/>
            <person name="Morinaga M."/>
            <person name="Sasaki M."/>
            <person name="Togashi T."/>
            <person name="Oyama M."/>
            <person name="Hata H."/>
            <person name="Watanabe M."/>
            <person name="Komatsu T."/>
            <person name="Mizushima-Sugano J."/>
            <person name="Satoh T."/>
            <person name="Shirai Y."/>
            <person name="Takahashi Y."/>
            <person name="Nakagawa K."/>
            <person name="Okumura K."/>
            <person name="Nagase T."/>
            <person name="Nomura N."/>
            <person name="Kikuchi H."/>
            <person name="Masuho Y."/>
            <person name="Yamashita R."/>
            <person name="Nakai K."/>
            <person name="Yada T."/>
            <person name="Nakamura Y."/>
            <person name="Ohara O."/>
            <person name="Isogai T."/>
            <person name="Sugano S."/>
        </authorList>
    </citation>
    <scope>NUCLEOTIDE SEQUENCE [LARGE SCALE MRNA] (ISOFORM 1)</scope>
    <source>
        <tissue>Brain</tissue>
    </source>
</reference>
<reference key="8">
    <citation type="journal article" date="2000" name="Nature">
        <title>The DNA sequence of human chromosome 21.</title>
        <authorList>
            <person name="Hattori M."/>
            <person name="Fujiyama A."/>
            <person name="Taylor T.D."/>
            <person name="Watanabe H."/>
            <person name="Yada T."/>
            <person name="Park H.-S."/>
            <person name="Toyoda A."/>
            <person name="Ishii K."/>
            <person name="Totoki Y."/>
            <person name="Choi D.-K."/>
            <person name="Groner Y."/>
            <person name="Soeda E."/>
            <person name="Ohki M."/>
            <person name="Takagi T."/>
            <person name="Sakaki Y."/>
            <person name="Taudien S."/>
            <person name="Blechschmidt K."/>
            <person name="Polley A."/>
            <person name="Menzel U."/>
            <person name="Delabar J."/>
            <person name="Kumpf K."/>
            <person name="Lehmann R."/>
            <person name="Patterson D."/>
            <person name="Reichwald K."/>
            <person name="Rump A."/>
            <person name="Schillhabel M."/>
            <person name="Schudy A."/>
            <person name="Zimmermann W."/>
            <person name="Rosenthal A."/>
            <person name="Kudoh J."/>
            <person name="Shibuya K."/>
            <person name="Kawasaki K."/>
            <person name="Asakawa S."/>
            <person name="Shintani A."/>
            <person name="Sasaki T."/>
            <person name="Nagamine K."/>
            <person name="Mitsuyama S."/>
            <person name="Antonarakis S.E."/>
            <person name="Minoshima S."/>
            <person name="Shimizu N."/>
            <person name="Nordsiek G."/>
            <person name="Hornischer K."/>
            <person name="Brandt P."/>
            <person name="Scharfe M."/>
            <person name="Schoen O."/>
            <person name="Desario A."/>
            <person name="Reichelt J."/>
            <person name="Kauer G."/>
            <person name="Bloecker H."/>
            <person name="Ramser J."/>
            <person name="Beck A."/>
            <person name="Klages S."/>
            <person name="Hennig S."/>
            <person name="Riesselmann L."/>
            <person name="Dagand E."/>
            <person name="Wehrmeyer S."/>
            <person name="Borzym K."/>
            <person name="Gardiner K."/>
            <person name="Nizetic D."/>
            <person name="Francis F."/>
            <person name="Lehrach H."/>
            <person name="Reinhardt R."/>
            <person name="Yaspo M.-L."/>
        </authorList>
    </citation>
    <scope>NUCLEOTIDE SEQUENCE [LARGE SCALE GENOMIC DNA]</scope>
</reference>
<reference key="9">
    <citation type="submission" date="2005-09" db="EMBL/GenBank/DDBJ databases">
        <authorList>
            <person name="Mural R.J."/>
            <person name="Istrail S."/>
            <person name="Sutton G.G."/>
            <person name="Florea L."/>
            <person name="Halpern A.L."/>
            <person name="Mobarry C.M."/>
            <person name="Lippert R."/>
            <person name="Walenz B."/>
            <person name="Shatkay H."/>
            <person name="Dew I."/>
            <person name="Miller J.R."/>
            <person name="Flanigan M.J."/>
            <person name="Edwards N.J."/>
            <person name="Bolanos R."/>
            <person name="Fasulo D."/>
            <person name="Halldorsson B.V."/>
            <person name="Hannenhalli S."/>
            <person name="Turner R."/>
            <person name="Yooseph S."/>
            <person name="Lu F."/>
            <person name="Nusskern D.R."/>
            <person name="Shue B.C."/>
            <person name="Zheng X.H."/>
            <person name="Zhong F."/>
            <person name="Delcher A.L."/>
            <person name="Huson D.H."/>
            <person name="Kravitz S.A."/>
            <person name="Mouchard L."/>
            <person name="Reinert K."/>
            <person name="Remington K.A."/>
            <person name="Clark A.G."/>
            <person name="Waterman M.S."/>
            <person name="Eichler E.E."/>
            <person name="Adams M.D."/>
            <person name="Hunkapiller M.W."/>
            <person name="Myers E.W."/>
            <person name="Venter J.C."/>
        </authorList>
    </citation>
    <scope>NUCLEOTIDE SEQUENCE [LARGE SCALE GENOMIC DNA]</scope>
</reference>
<reference key="10">
    <citation type="journal article" date="2004" name="Genome Res.">
        <title>The status, quality, and expansion of the NIH full-length cDNA project: the Mammalian Gene Collection (MGC).</title>
        <authorList>
            <consortium name="The MGC Project Team"/>
        </authorList>
    </citation>
    <scope>NUCLEOTIDE SEQUENCE [LARGE SCALE MRNA] (ISOFORM 1)</scope>
    <scope>VARIANT PRO-69</scope>
    <source>
        <tissue>Brain</tissue>
        <tissue>Eye</tissue>
        <tissue>Lung</tissue>
        <tissue>Muscle</tissue>
    </source>
</reference>
<reference key="11">
    <citation type="journal article" date="1978" name="J. Biol. Chem.">
        <title>Purification and properties of cystathionine beta-synthase from human liver. Evidence for identical subunits.</title>
        <authorList>
            <person name="Kraus J.P."/>
            <person name="Packman S."/>
            <person name="Fowler B."/>
            <person name="Rosenberg L.E."/>
        </authorList>
    </citation>
    <scope>CHARACTERIZATION</scope>
</reference>
<reference key="12">
    <citation type="journal article" date="2006" name="Biochemistry">
        <title>Human cystathionine beta-synthase is a target for sumoylation.</title>
        <authorList>
            <person name="Kabil O."/>
            <person name="Zhou Y."/>
            <person name="Banerjee R."/>
        </authorList>
    </citation>
    <scope>SUMOYLATION AT LYS-211</scope>
    <scope>SUBCELLULAR LOCATION</scope>
</reference>
<reference key="13">
    <citation type="journal article" date="2009" name="Anal. Chem.">
        <title>Lys-N and trypsin cover complementary parts of the phosphoproteome in a refined SCX-based approach.</title>
        <authorList>
            <person name="Gauci S."/>
            <person name="Helbig A.O."/>
            <person name="Slijper M."/>
            <person name="Krijgsveld J."/>
            <person name="Heck A.J."/>
            <person name="Mohammed S."/>
        </authorList>
    </citation>
    <scope>IDENTIFICATION BY MASS SPECTROMETRY [LARGE SCALE ANALYSIS]</scope>
</reference>
<reference key="14">
    <citation type="journal article" date="2011" name="BMC Syst. Biol.">
        <title>Initial characterization of the human central proteome.</title>
        <authorList>
            <person name="Burkard T.R."/>
            <person name="Planyavsky M."/>
            <person name="Kaupe I."/>
            <person name="Breitwieser F.P."/>
            <person name="Buerckstuemmer T."/>
            <person name="Bennett K.L."/>
            <person name="Superti-Furga G."/>
            <person name="Colinge J."/>
        </authorList>
    </citation>
    <scope>IDENTIFICATION BY MASS SPECTROMETRY [LARGE SCALE ANALYSIS]</scope>
</reference>
<reference key="15">
    <citation type="journal article" date="2011" name="Sci. Signal.">
        <title>System-wide temporal characterization of the proteome and phosphoproteome of human embryonic stem cell differentiation.</title>
        <authorList>
            <person name="Rigbolt K.T."/>
            <person name="Prokhorova T.A."/>
            <person name="Akimov V."/>
            <person name="Henningsen J."/>
            <person name="Johansen P.T."/>
            <person name="Kratchmarova I."/>
            <person name="Kassem M."/>
            <person name="Mann M."/>
            <person name="Olsen J.V."/>
            <person name="Blagoev B."/>
        </authorList>
    </citation>
    <scope>PHOSPHORYLATION [LARGE SCALE ANALYSIS] AT SER-27</scope>
    <scope>IDENTIFICATION BY MASS SPECTROMETRY [LARGE SCALE ANALYSIS]</scope>
</reference>
<reference key="16">
    <citation type="journal article" date="2013" name="J. Proteome Res.">
        <title>Toward a comprehensive characterization of a human cancer cell phosphoproteome.</title>
        <authorList>
            <person name="Zhou H."/>
            <person name="Di Palma S."/>
            <person name="Preisinger C."/>
            <person name="Peng M."/>
            <person name="Polat A.N."/>
            <person name="Heck A.J."/>
            <person name="Mohammed S."/>
        </authorList>
    </citation>
    <scope>PHOSPHORYLATION [LARGE SCALE ANALYSIS] AT SER-199</scope>
    <scope>IDENTIFICATION BY MASS SPECTROMETRY [LARGE SCALE ANALYSIS]</scope>
    <source>
        <tissue>Cervix carcinoma</tissue>
        <tissue>Erythroleukemia</tissue>
    </source>
</reference>
<reference key="17">
    <citation type="journal article" date="2014" name="J. Proteomics">
        <title>An enzyme assisted RP-RPLC approach for in-depth analysis of human liver phosphoproteome.</title>
        <authorList>
            <person name="Bian Y."/>
            <person name="Song C."/>
            <person name="Cheng K."/>
            <person name="Dong M."/>
            <person name="Wang F."/>
            <person name="Huang J."/>
            <person name="Sun D."/>
            <person name="Wang L."/>
            <person name="Ye M."/>
            <person name="Zou H."/>
        </authorList>
    </citation>
    <scope>IDENTIFICATION BY MASS SPECTROMETRY [LARGE SCALE ANALYSIS]</scope>
    <source>
        <tissue>Liver</tissue>
    </source>
</reference>
<reference key="18">
    <citation type="journal article" date="2010" name="Hum. Mutat.">
        <title>Cystathionine beta-synthase mutations: effect of mutation topology on folding and activity.</title>
        <authorList>
            <person name="Kozich V."/>
            <person name="Sokolova J."/>
            <person name="Klatovska V."/>
            <person name="Krijt J."/>
            <person name="Janosik M."/>
            <person name="Jelinek K."/>
            <person name="Kraus J.P."/>
        </authorList>
    </citation>
    <scope>CHARACTERIZATION OF VARIANTS CBSD LEU-49; ARG-65; ARG-78; ASN-102; VAL-114; GLN-125; LYS-144; ARG-148; TYR-165; LYS-176; ALA-180; MET-191; LYS-228; ARG-262; LYS-266; THR-278; LYS-302; ARG-305; SER-307; CYS-369; LEU-422; THR-435; GLN-439; ASN-444; LEU-466 AND SER-539</scope>
    <scope>FUNCTION</scope>
    <scope>CATALYTIC ACTIVITY</scope>
    <scope>PATHWAY</scope>
    <scope>ACTIVITY REGULATION</scope>
    <scope>SUBUNIT</scope>
</reference>
<reference key="19">
    <citation type="journal article" date="2001" name="EMBO J.">
        <title>Structure of human cystathionine beta-synthase: a unique pyridoxal 5'-phosphate-dependent heme protein.</title>
        <authorList>
            <person name="Meier M."/>
            <person name="Janosik M."/>
            <person name="Kery V."/>
            <person name="Kraus J.P."/>
            <person name="Burkhard P."/>
        </authorList>
    </citation>
    <scope>X-RAY CRYSTALLOGRAPHY (2.6 ANGSTROMS) OF 1-413 IN COMPLEX WITH PYRIDOXAL PHOSPHATE AND IRON</scope>
    <scope>SUBUNIT</scope>
    <scope>ACTIVITY REGULATION</scope>
    <scope>REGION</scope>
</reference>
<reference key="20">
    <citation type="journal article" date="2002" name="Biochemistry">
        <title>Human cystathionine beta-synthase is a heme sensor protein. Evidence that the redox sensor is heme and not the vicinal cysteines in the CXXC motif seen in the crystal structure of the truncated enzyme.</title>
        <authorList>
            <person name="Taoka S."/>
            <person name="Lepore B.W."/>
            <person name="Kabil O."/>
            <person name="Ojha S."/>
            <person name="Ringe D."/>
            <person name="Banerjee R."/>
        </authorList>
    </citation>
    <scope>X-RAY CRYSTALLOGRAPHY (2.9 ANGSTROMS) OF 45-406 IN COMPLEX WITH PYRIDOXAL PHOSPHATE AND IRON</scope>
    <scope>ALLOSTERIC ACTIVATOR ADOMET</scope>
    <scope>MUTAGENESIS OF CYS-272 AND CYS-275</scope>
    <scope>REGION</scope>
</reference>
<reference key="21">
    <citation type="journal article" date="1999" name="Hum. Mutat.">
        <title>Cystathionine beta-synthase mutations in homocystinuria.</title>
        <authorList>
            <person name="Kraus J.P."/>
            <person name="Janosik M."/>
            <person name="Kozich V."/>
            <person name="Mandell R."/>
            <person name="Shih V.E."/>
            <person name="Sperandeo M.P."/>
            <person name="Sebastio G."/>
            <person name="de Franchis R."/>
            <person name="Andria G."/>
            <person name="Kluijtmans L.A.J."/>
            <person name="Blom H.J."/>
            <person name="Boers G.H.J."/>
            <person name="Gordon R.B."/>
            <person name="Kamoun P."/>
            <person name="Tsai M.Y."/>
            <person name="Kruger W.D."/>
            <person name="Koch H.G."/>
            <person name="Ohura T."/>
            <person name="Gaustadnes M."/>
        </authorList>
    </citation>
    <scope>REVIEW ON CBSD VARIANTS</scope>
</reference>
<reference key="22">
    <citation type="journal article" date="1992" name="Hum. Mutat.">
        <title>Screening for mutations by expressing patient cDNA segments in E. coli: homocystinuria due to cystathionine beta-synthase deficiency.</title>
        <authorList>
            <person name="Kozich V."/>
            <person name="Kraus J.P."/>
        </authorList>
    </citation>
    <scope>VARIANT CBSD THR-278</scope>
</reference>
<reference key="23">
    <citation type="journal article" date="1993" name="Hum. Mol. Genet.">
        <title>Molecular defect in a patient with pyridoxine-responsive homocystinuria.</title>
        <authorList>
            <person name="Kozich V."/>
            <person name="de Franchis R."/>
            <person name="Kraus J.P."/>
        </authorList>
    </citation>
    <scope>VARIANTS CBSD VAL-114 AND LEU-145</scope>
</reference>
<reference key="24">
    <citation type="journal article" date="1993" name="Hum. Mol. Genet.">
        <title>Molecular basis of cystathionine beta-synthase deficiency in pyridoxine responsive and nonresponsive homocystinuria.</title>
        <authorList>
            <person name="Hu F.L."/>
            <person name="Gu Z."/>
            <person name="Kozich V."/>
            <person name="Kraus J.P."/>
            <person name="Ramesh V."/>
            <person name="Shih V.E."/>
        </authorList>
    </citation>
    <scope>VARIANTS CBSD THR-278 AND SER-307</scope>
</reference>
<reference key="25">
    <citation type="journal article" date="1994" name="Hum. Mol. Genet.">
        <title>Identical genotypes in siblings with different homocystinuric phenotypes: identification of three mutations in cystathionine beta-synthase using an improved bacterial expression system.</title>
        <authorList>
            <person name="de Franchis R."/>
            <person name="Kozich V."/>
            <person name="McInnes R."/>
            <person name="Kraus J.P."/>
        </authorList>
    </citation>
    <scope>VARIANTS CBSD ARG-78 AND ASN-102</scope>
</reference>
<reference key="26">
    <citation type="journal article" date="1994" name="Hum. Mol. Genet.">
        <title>Characterization of a cystathionine beta-synthase allele with three mutations in cis in a patient with B6 nonresponsive homocystinuria.</title>
        <authorList>
            <person name="Marble M."/>
            <person name="Geraghty M.T."/>
            <person name="de Franchis R."/>
            <person name="Kraus J.P."/>
            <person name="Valle D."/>
        </authorList>
    </citation>
    <scope>VARIANTS CBSD GLN-125 AND ASP-131</scope>
</reference>
<reference key="27">
    <citation type="journal article" date="1994" name="J. Inherit. Metab. Dis.">
        <title>Komrower Lecture. Molecular basis of phenotype expression in homocystinuria.</title>
        <authorList>
            <person name="Kraus J.P."/>
        </authorList>
    </citation>
    <scope>VARIANTS CBSD</scope>
</reference>
<reference key="28">
    <citation type="journal article" date="1995" name="Am. J. Hum. Genet.">
        <title>A missense mutation (I278T) in the cystathionine beta-synthase gene prevalent in pyridoxine-responsive homocystinuria and associated with mild clinical phenotype.</title>
        <authorList>
            <person name="Shih V.E."/>
            <person name="Fringer J.M."/>
            <person name="Mandell R."/>
            <person name="Kraus J.P."/>
            <person name="Berry G.T."/>
            <person name="Heidenreich R.A."/>
            <person name="Korson M.S."/>
            <person name="Levy H.L."/>
            <person name="Ramesh V."/>
        </authorList>
    </citation>
    <scope>VARIANTS CBSD ARG-139; LYS-144 AND THR-278</scope>
</reference>
<reference key="29">
    <citation type="journal article" date="1995" name="Am. J. Hum. Genet.">
        <title>The molecular basis of homocystinuria due to cystathionine beta-synthase deficiency in Italian families, and report of four novel mutations.</title>
        <authorList>
            <person name="Sebastio G."/>
            <person name="Sperandeo M.P."/>
            <person name="Panico M."/>
            <person name="de Franchis R."/>
            <person name="Kraus J.P."/>
            <person name="Andria G."/>
        </authorList>
    </citation>
    <scope>VARIANTS CBSD SER-88; GLN-125 AND MET-257</scope>
</reference>
<reference key="30">
    <citation type="journal article" date="1995" name="Hum. Genet.">
        <title>Two novel missense mutations in the cystathionine beta-synthase gene in homocystinuric patients.</title>
        <authorList>
            <person name="Kluijtmans L.A.J."/>
            <person name="Blom H.J."/>
            <person name="Boers G.H.J."/>
            <person name="van Oost B.A."/>
            <person name="Trijbels F.J.M."/>
            <person name="van den Heuvel L.P.W.J."/>
        </authorList>
    </citation>
    <scope>VARIANTS CBSD TYR-165 AND MET-371</scope>
</reference>
<reference key="31">
    <citation type="journal article" date="1995" name="Hum. Mol. Genet.">
        <title>A yeast assay for functional detection of mutations in the human cystathionine beta-synthase gene.</title>
        <authorList>
            <person name="Kruger W.D."/>
            <person name="Cox D.R."/>
        </authorList>
    </citation>
    <scope>VARIANTS CBSD MET-168; HIS-224; THR-278; SER-307; VAL-331 AND GLU-454</scope>
</reference>
<reference key="32">
    <citation type="journal article" date="1995" name="J. Inherit. Metab. Dis.">
        <title>Molecular analysis of patients affected by homocystinuria due to cystathionine beta-synthase deficiency: report of a new mutation in exon 8 and a deletion in intron 11.</title>
        <authorList>
            <person name="Sperandeo M.P."/>
            <person name="Panico M."/>
            <person name="Pepe A."/>
            <person name="Candito M."/>
            <person name="de Franchis R."/>
            <person name="Kraus J.P."/>
            <person name="Andria G."/>
            <person name="Sebastio G."/>
        </authorList>
    </citation>
    <scope>VARIANT CBSD LEU-290</scope>
</reference>
<reference key="33">
    <citation type="journal article" date="1996" name="J. Clin. Invest.">
        <title>Defective cystathionine beta-synthase regulation by S-adenosylmethionine in a partially pyridoxine responsive homocystinuria patient.</title>
        <authorList>
            <person name="Kluijtmans L.A.J."/>
            <person name="Boers G.H.J."/>
            <person name="Stevens E.M.B."/>
            <person name="Renier W.O."/>
            <person name="Kraus J.P."/>
            <person name="Trijbels F.J.M."/>
            <person name="van den Heuvel L.P.W.J."/>
            <person name="Blom H.J."/>
        </authorList>
    </citation>
    <scope>VARIANT CBSD ASN-444</scope>
    <scope>CHARACTERIZATION OF VARIANT CBSD ASN-444</scope>
</reference>
<reference key="34">
    <citation type="journal article" date="1996" name="J. Inherit. Metab. Dis.">
        <title>Homocysteine response to methionine challenge in four obligate heterozygotes for homocystinuria and relationship with cystathionine beta-synthase mutations.</title>
        <authorList>
            <person name="Sperandeo M.P."/>
            <person name="Candito M."/>
            <person name="Sebastio G."/>
            <person name="Rolland M.O."/>
            <person name="Turc-Carel C."/>
            <person name="Giudicelli H."/>
            <person name="Dellamonica P."/>
            <person name="Andria G."/>
        </authorList>
    </citation>
    <scope>VARIANTS CBSD ARG-116; THR-278 AND LEU-290</scope>
</reference>
<reference key="35">
    <citation type="journal article" date="1997" name="Eur. J. Hum. Genet.">
        <title>Characterisation of five missense mutations in the cystathionine beta-synthase gene from three patients with B6-nonresponsive homocystinuria.</title>
        <authorList>
            <person name="Dawson P.A."/>
            <person name="Cox A.J."/>
            <person name="Emmerson B.T."/>
            <person name="Dudman N.P.B."/>
            <person name="Kraus J.P."/>
            <person name="Gordon R.B."/>
        </authorList>
    </citation>
    <scope>VARIANTS CBSD LYS-144; THR-278; GLU-331; MET-353 AND GLN-439</scope>
</reference>
<reference key="36">
    <citation type="journal article" date="1997" name="Hum. Mol. Genet.">
        <title>Functional modeling of vitamin responsiveness in yeast: a common pyridoxine-responsive cystathionine beta-synthase mutation in homocystinuria.</title>
        <authorList>
            <person name="Kim C.E."/>
            <person name="Gallagher P.M."/>
            <person name="Guttormsen A.B."/>
            <person name="Refsum H."/>
            <person name="Ueland P.M."/>
            <person name="Ose L."/>
            <person name="Foelling I."/>
            <person name="Whitehead A.S."/>
            <person name="Tsai M.Y."/>
            <person name="Kruger W.D."/>
        </authorList>
    </citation>
    <scope>VARIANTS CBSD MET-262; LYS-266; THR-278; SER-307; ALA-320 AND CYS-369</scope>
</reference>
<reference key="37">
    <citation type="journal article" date="1997" name="Hum. Mutat.">
        <title>Two novel mutations (K384E and L539S) in the C-terminal moiety of the cystathionine beta-synthase protein in two French pyridoxine-responsive homocystinuria patients.</title>
        <authorList>
            <person name="Aral B."/>
            <person name="Coude M."/>
            <person name="London J."/>
            <person name="Aupetit J."/>
            <person name="Chasse J.-F."/>
            <person name="Zabot M.-T."/>
            <person name="Chadefaux-Vekemans B."/>
            <person name="Kamoun P."/>
        </authorList>
    </citation>
    <scope>VARIANTS CBSD GLU-384 AND SER-539</scope>
</reference>
<reference key="38">
    <citation type="journal article" date="1997" name="J. Inherit. Metab. Dis.">
        <title>Analysis of CBS alleles in Czech and Slovak patients with homocystinuria: report on three novel mutations E176K, W409X and 1223 + 37 del99.</title>
        <authorList>
            <person name="Kozich V."/>
            <person name="Janosik M."/>
            <person name="Sokolova J."/>
            <person name="Oliveriusova J."/>
            <person name="Orendac M."/>
            <person name="Kraus J.P."/>
            <person name="Elleder D."/>
        </authorList>
    </citation>
    <scope>VARIANTS CBSD LYS-176; THR-278 AND SER-307</scope>
</reference>
<reference key="39">
    <citation type="journal article" date="1997" name="Mol. Diagn.">
        <title>Two novel mutations in the cystathionine beta-synthase gene of homocystinuric patients.</title>
        <authorList>
            <person name="Tsai M.Y."/>
            <person name="Wong P.W.K."/>
            <person name="Garg U."/>
            <person name="Hanson N.Q."/>
            <person name="Schwichtenberg K."/>
        </authorList>
    </citation>
    <scope>VARIANTS CBSD TYR-370 AND GLN-439</scope>
</reference>
<reference key="40">
    <citation type="journal article" date="1998" name="Hum. Mutat.">
        <title>Mutational analysis of the cystathionine beta-synthase gene: a splicing mutation, two missense mutations and an insertion in patients with homocystinuria.</title>
        <authorList>
            <person name="Gordon R.B."/>
            <person name="Cox A.J."/>
            <person name="Dawson P.A."/>
            <person name="Emmerson B.T."/>
            <person name="Kraus J.P."/>
            <person name="Dudman N.P."/>
        </authorList>
    </citation>
    <scope>VARIANTS CBSD LYS-144 AND TYR-165</scope>
</reference>
<reference key="41">
    <citation type="journal article" date="1998" name="Mol. Genet. Metab.">
        <title>Characterization of mutations in the cystathionine beta-synthase gene in Irish patients with homocystinuria.</title>
        <authorList>
            <person name="Gallagher P.M."/>
            <person name="Naughten E."/>
            <person name="Hanson N.Q."/>
            <person name="Schwichtenberg K."/>
            <person name="Bignell M."/>
            <person name="Yuan M."/>
            <person name="Ward P."/>
            <person name="Yap S."/>
            <person name="Whitehead A.S."/>
            <person name="Tsai M.Y."/>
        </authorList>
    </citation>
    <scope>VARIANTS CBSD PRO-101; LYS-228; MET-262; THR-278; SER-307 AND PRO-355</scope>
</reference>
<reference key="42">
    <citation type="journal article" date="1999" name="Hum. Mutat.">
        <title>Four novel mutations in the cystathionine beta-synthase gene: effect of a second linked mutation on the severity of the homocystinuric phenotype.</title>
        <authorList>
            <person name="de Franchis R."/>
            <person name="Kraus E."/>
            <person name="Kozich V."/>
            <person name="Sebastio G."/>
            <person name="Kraus J.P."/>
        </authorList>
    </citation>
    <scope>VARIANTS CBSD TRP-58; VAL-126; LYS-302 AND CYS-336</scope>
</reference>
<reference key="43">
    <citation type="journal article" date="2000" name="Hum. Mutat.">
        <title>Homocystinuria in the Arab population of Israel: identification of two novel mutations using DGGE analysis.</title>
        <authorList>
            <person name="Gat-Yablonski G."/>
            <person name="Mandel H."/>
            <person name="Fowler B."/>
            <person name="Taleb O."/>
            <person name="Sela B.-A."/>
        </authorList>
    </citation>
    <scope>VARIANTS CBSD ARG-262 AND THR-278</scope>
    <scope>VARIANT GLN-102</scope>
</reference>
<reference key="44">
    <citation type="journal article" date="2001" name="Am. J. Hum. Genet.">
        <title>Impaired heme binding and aggregation of mutant cystathionine beta-synthase subunits in homocystinuria.</title>
        <authorList>
            <person name="Janosik M."/>
            <person name="Oliveriusova J."/>
            <person name="Janosikova B."/>
            <person name="Sokolova J."/>
            <person name="Kraus E."/>
            <person name="Kraus J.P."/>
            <person name="Kozich V."/>
        </authorList>
    </citation>
    <scope>VARIANTS CBSD ARG-65; VAL-114; LYS-144; THR-155; TYR-165; LYS-176 AND THR-278</scope>
    <scope>CHARACTERIZATION OF VARIANTS CBSD VAL-114; LYS-144; THR-155; TYR-165; LYS-176 AND THR-278</scope>
</reference>
<reference key="45">
    <citation type="journal article" date="2001" name="Clin. Genet.">
        <title>Molecular genetic analysis of the cystathionine beta-synthase gene in Portuguese homocystinuria patients: three novel mutations.</title>
        <authorList>
            <person name="Castro R."/>
            <person name="Heil S.G."/>
            <person name="Rivera I."/>
            <person name="Jakobs C."/>
            <person name="de Almeida I.T."/>
            <person name="Blom H.J."/>
        </authorList>
    </citation>
    <scope>VARIANTS CBSD PRO-125 AND THR-361</scope>
</reference>
<reference key="46">
    <citation type="journal article" date="2002" name="Hum. Mutat.">
        <title>High homocysteine and thrombosis without connective tissue disorders are associated with a novel class of cystathionine beta-synthase (CBS) mutations.</title>
        <authorList>
            <person name="Maclean K.N."/>
            <person name="Gaustadnes M."/>
            <person name="Oliveriusova J."/>
            <person name="Janosik M."/>
            <person name="Kraus E."/>
            <person name="Kozich V."/>
            <person name="Kery V."/>
            <person name="Skovby F."/>
            <person name="Ruediger N."/>
            <person name="Ingerslev J."/>
            <person name="Stabler S.P."/>
            <person name="Allen R.H."/>
            <person name="Kraus J.P."/>
        </authorList>
    </citation>
    <scope>VARIANTS CBSD ARG-85; THR-278; LEU-422; THR-435; ASN-444 AND LEU-466</scope>
    <scope>CHARACTERIZATION OF VARIANTS CBSD ARG-85; LEU-422; THR-435 AND LEU-466</scope>
</reference>
<reference key="47">
    <citation type="journal article" date="2002" name="Hum. Mutat.">
        <title>The molecular basis of cystathionine beta-synthase deficiency in Australian patients: genotype-phenotype correlations and response to treatment.</title>
        <authorList>
            <person name="Gaustadnes M."/>
            <person name="Wilcken B."/>
            <person name="Oliveriusova J."/>
            <person name="McGill J."/>
            <person name="Fletcher J."/>
            <person name="Kraus J.P."/>
            <person name="Wilcken D.E."/>
        </authorList>
    </citation>
    <scope>VARIANTS CBSD LEU-49; PRO-101; ARG-109; GLN-125; LYS-144; TYR-165; LYS-228; THR-278; LYS-302; SER-307; GLU-331; CYS-336; SER-347; MET-353; CYS-369; MET-371 AND GLN-439</scope>
    <scope>CHARACTERIZATION OF VARIANTS CBSD PRO-101; ARG-109; LYS-228 AND SER-347</scope>
</reference>
<reference key="48">
    <citation type="journal article" date="2003" name="Hum. Mutat.">
        <title>Spectrum of CBS mutations in 16 homocystinuric patients from the iberian peninsula: high prevalence of T191M and absence of I278T or G307S.</title>
        <authorList>
            <person name="Urreizti R."/>
            <person name="Balcells S."/>
            <person name="Rodes M."/>
            <person name="Vilarinho L."/>
            <person name="Baldellou A."/>
            <person name="Couce M.L."/>
            <person name="Munoz C."/>
            <person name="Campistol J."/>
            <person name="Pinto X."/>
            <person name="Vilaseca M.A."/>
            <person name="Grinberg D."/>
        </authorList>
    </citation>
    <scope>VARIANTS CBSD TRP-125; MET-191; TYR-275; CYS-336; PRO-338; ASN-349; GLN-379 AND PRO-456</scope>
</reference>
<reference key="49">
    <citation type="journal article" date="2003" name="Hum. Mutat.">
        <title>Cystathionine beta-synthase deficiency in Georgia (USA): correlation of clinical and biochemical phenotype with genotype.</title>
        <authorList>
            <person name="Kruger W.D."/>
            <person name="Wang L."/>
            <person name="Jhee K.H."/>
            <person name="Singh R.H."/>
            <person name="Elsas L.J. II"/>
        </authorList>
    </citation>
    <scope>VARIANTS CBSD PRO-101; THR-226; SER-228; PRO-231; THR-278; SER-307; ALA-320; MET-353; ASN-376 AND LYS-526</scope>
    <scope>CHARACTERIZATION OF VARIANTS CBSD PRO-101; THR-226; SER-228; PRO-231; THR-278; SER-307; ALA-320; MET-353; ASN-376 AND LYS-526</scope>
</reference>
<reference key="50">
    <citation type="journal article" date="2004" name="Hum. Mutat.">
        <title>Identification and functional analysis of two novel mutations in the CBS gene in Polish patients with homocystinuria.</title>
        <authorList>
            <person name="Orendac M."/>
            <person name="Pronicka E."/>
            <person name="Kubalska J."/>
            <person name="Janosik M."/>
            <person name="Sokolova J."/>
            <person name="Linnebank M."/>
            <person name="Koch H.G."/>
            <person name="Kozich V."/>
        </authorList>
    </citation>
    <scope>VARIANTS CBSD MET-143; ARG-148; LYS-228 AND THR-278</scope>
    <scope>CHARACTERIZATION OF VARIANTS CBSD MET-143 AND ARG-148</scope>
</reference>
<reference key="51">
    <citation type="journal article" date="2004" name="Hum. Mutat.">
        <title>The cystathionine beta-synthase (CBS) mutation c.1224-2A&gt;C in Central Europe: vitamin B6 nonresponsiveness and a common ancestral haplotype.</title>
        <authorList>
            <person name="Linnebank M."/>
            <person name="Janosik M."/>
            <person name="Kozich V."/>
            <person name="Pronicka E."/>
            <person name="Kubalska J."/>
            <person name="Sokolova J."/>
            <person name="Linnebank A."/>
            <person name="Schmidt E."/>
            <person name="Leyendecker C."/>
            <person name="Klockgether T."/>
            <person name="Kraus J.P."/>
            <person name="Koch H.G."/>
        </authorList>
    </citation>
    <scope>VARIANTS CBSD 247-LYS--GLY-256 DEL; PRO-288 AND TRP-379</scope>
</reference>
<reference key="52">
    <citation type="journal article" date="2005" name="Clin. Chim. Acta">
        <title>Molecular analysis of homocystinuria in Brazilian patients.</title>
        <authorList>
            <person name="Porto M.P.R."/>
            <person name="Galdieri L.C."/>
            <person name="Pereira V.G."/>
            <person name="Vergani N."/>
            <person name="da Rocha J.C.C."/>
            <person name="Micheletti C."/>
            <person name="Martins A.M."/>
            <person name="Perez A.B.A."/>
            <person name="Almeida V.D."/>
        </authorList>
    </citation>
    <scope>VARIANTS CBSD ALA-168; MET-191 AND THR-278</scope>
</reference>
<reference key="53">
    <citation type="journal article" date="2005" name="J. Hum. Genet.">
        <title>Identification and functional analysis of cystathionine beta-synthase gene mutations in patients with homocystinuria.</title>
        <authorList>
            <person name="Lee S.-J."/>
            <person name="Lee D.H."/>
            <person name="Yoo H.-W."/>
            <person name="Koo S.K."/>
            <person name="Park E.-S."/>
            <person name="Park J.-W."/>
            <person name="Lim H.G."/>
            <person name="Jung S.-C."/>
        </authorList>
    </citation>
    <scope>VARIANTS CBSD GLN-154; VAL-155; ASP-234 DEL; MET-257; THR-288; CYS-336; SER-347 AND MET-353</scope>
    <scope>VARIANT CYS-18</scope>
    <scope>CHARACTERIZATION OF VARIANTS CBSD GLN-154; VAL-155; ASP-234 DEL; MET-257; THR-288; CYS-336; SER-347 AND MET-353</scope>
    <scope>CHARACTERIZATION OF VARIANT CYS-18</scope>
</reference>
<reference key="54">
    <citation type="journal article" date="2006" name="Hum. Mutat.">
        <title>Functional assays testing pathogenicity of 14 cystathionine-beta synthase mutations.</title>
        <authorList>
            <person name="Urreizti R."/>
            <person name="Asteggiano C."/>
            <person name="Cozar M."/>
            <person name="Frank N."/>
            <person name="Vilaseca M.A."/>
            <person name="Grinberg D."/>
            <person name="Balcells S."/>
        </authorList>
    </citation>
    <scope>CHARACTERIZATION OF VARIANTS CBSD TRP-125; ARG-148; VAL-173; MET-191; THR-226; TYR-275; CYS-336; HIS-336; PRO-338; ASN-349; GLN-379 AND PRO-456</scope>
    <scope>CHARACTERIZATION OF VARIANT GLN-548</scope>
</reference>
<reference key="55">
    <citation type="journal article" date="2011" name="Hum. Mutat.">
        <title>Identification and functional analyses of CBS alleles in Spanish and Argentinian homocystinuric patients.</title>
        <authorList>
            <person name="Cozar M."/>
            <person name="Urreizti R."/>
            <person name="Vilarinho L."/>
            <person name="Grosso C."/>
            <person name="Dodelson de Kremer R."/>
            <person name="Asteggiano C.G."/>
            <person name="Dalmau J."/>
            <person name="Garcia A.M."/>
            <person name="Vilaseca M.A."/>
            <person name="Grinberg D."/>
            <person name="Balcells S."/>
        </authorList>
    </citation>
    <scope>VARIANTS CBSD MET-173 DEL; LEU-200; SER-278; ASN-281; VAL-321 AND SER-446</scope>
    <scope>CHARACTERIZATION OF VARIANTS CBSD MET-173 DEL; SER-278; ASN-281 AND VAL-321</scope>
</reference>
<reference key="56">
    <citation type="journal article" date="2011" name="Pathology">
        <title>CBS gene mutations found in a Chinese pyridoxine-responsive homocystinuria patient.</title>
        <authorList>
            <person name="Kwok J.S."/>
            <person name="Fung S.L."/>
            <person name="Lui G.C."/>
            <person name="Law E.L."/>
            <person name="Chan M.H."/>
            <person name="Leung C.B."/>
            <person name="Tang N.L."/>
        </authorList>
    </citation>
    <scope>VARIANTS CBSD THR-278 AND CYS-336</scope>
</reference>
<reference key="57">
    <citation type="journal article" date="2012" name="Biochemistry">
        <title>Effect of the disease-causing R266K mutation on the heme and PLP environments of human cystathionine beta-synthase.</title>
        <authorList>
            <person name="Smith A.T."/>
            <person name="Su Y."/>
            <person name="Stevens D.J."/>
            <person name="Majtan T."/>
            <person name="Kraus J.P."/>
            <person name="Burstyn J.N."/>
        </authorList>
    </citation>
    <scope>VARIANT CBSD LYS-266</scope>
    <scope>CHARACTERIZATION OF VARIANT CBSD LYS-266</scope>
    <scope>ACTIVITY REGULATION</scope>
</reference>
<reference key="58">
    <citation type="journal article" date="2013" name="Gene">
        <title>Characterization of two pathogenic mutations in cystathionine beta-synthase: different intracellular locations for wild-type and mutant proteins.</title>
        <authorList>
            <person name="Casique L."/>
            <person name="Kabil O."/>
            <person name="Banerjee R."/>
            <person name="Martinez J.C."/>
            <person name="De Lucca M."/>
        </authorList>
    </citation>
    <scope>VARIANTS CBSD ARG-85; ASN-87 AND ASN-234</scope>
    <scope>CHARACTERIZATION OF VARIANTS CBSD ASN-87 AND ASN-234</scope>
    <scope>FUNCTION</scope>
    <scope>CATALYTIC ACTIVITY</scope>
    <scope>PATHWAY</scope>
    <scope>COFACTOR</scope>
    <scope>SUBCELLULAR LOCATION</scope>
    <scope>SUBUNIT</scope>
</reference>
<reference key="59">
    <citation type="journal article" date="2014" name="Hum. Mutat.">
        <title>Insights into the regulatory domain of cystathionine Beta-synthase: characterization of six variant proteins.</title>
        <authorList>
            <person name="Mendes M.I."/>
            <person name="Santos A.S."/>
            <person name="Smith D.E."/>
            <person name="Lino P.R."/>
            <person name="Colaco H.G."/>
            <person name="de Almeida I.T."/>
            <person name="Vicente J.B."/>
            <person name="Salomons G.S."/>
            <person name="Rivera I."/>
            <person name="Blom H.J."/>
            <person name="Leandro P."/>
        </authorList>
    </citation>
    <scope>VARIANT CBSD GLY-449</scope>
    <scope>CHARACTERIZATION OF VARIANTS CBSD LEU-427; ASN-444; GLY-449; LEU-500 AND GLN-540</scope>
    <scope>CATALYTIC ACTIVITY</scope>
</reference>
<reference key="60">
    <citation type="journal article" date="2014" name="J. Inherit. Metab. Dis.">
        <title>Reduced response of Cystathionine Beta-Synthase (CBS) to S-Adenosylmethionine (SAM): Identification and functional analysis of CBS gene mutations in Homocystinuria patients.</title>
        <authorList>
            <person name="Mendes M.I."/>
            <person name="Colaco H.G."/>
            <person name="Smith D.E."/>
            <person name="Ramos R.J."/>
            <person name="Pop A."/>
            <person name="van Dooren S.J."/>
            <person name="Tavares de Almeida I."/>
            <person name="Kluijtmans L.A."/>
            <person name="Janssen M.C."/>
            <person name="Rivera I."/>
            <person name="Salomons G.S."/>
            <person name="Leandro P."/>
            <person name="Blom H.J."/>
        </authorList>
    </citation>
    <scope>VARIANTS CBSD LEU-49; LYS-269 DEL; THR-278; HIS-336; LEU-427; ASN-444; LEU-500 AND GLN-540</scope>
    <scope>CHARACTERIZATION OF VARIANTS CBSD LEU-49; LYS-269 DEL; THR-278; HIS-336; LEU-427; ASN-444; LEU-500 AND GLN-540</scope>
    <scope>FUNCTION</scope>
    <scope>CATALYTIC ACTIVITY</scope>
    <scope>PATHWAY</scope>
    <scope>ACTIVITY REGULATION</scope>
</reference>
<dbReference type="EC" id="4.2.1.22" evidence="24 28 29 30"/>
<dbReference type="EMBL" id="L19501">
    <property type="protein sequence ID" value="AAA19874.1"/>
    <property type="molecule type" value="mRNA"/>
</dbReference>
<dbReference type="EMBL" id="X82166">
    <property type="protein sequence ID" value="CAA57656.1"/>
    <property type="molecule type" value="mRNA"/>
</dbReference>
<dbReference type="EMBL" id="L14577">
    <property type="protein sequence ID" value="AAA98524.1"/>
    <property type="molecule type" value="mRNA"/>
</dbReference>
<dbReference type="EMBL" id="X88562">
    <property type="protein sequence ID" value="CAA61252.1"/>
    <property type="molecule type" value="Genomic_DNA"/>
</dbReference>
<dbReference type="EMBL" id="X91910">
    <property type="protein sequence ID" value="CAA61252.1"/>
    <property type="status" value="JOINED"/>
    <property type="molecule type" value="Genomic_DNA"/>
</dbReference>
<dbReference type="EMBL" id="X98811">
    <property type="protein sequence ID" value="CAA61252.1"/>
    <property type="status" value="JOINED"/>
    <property type="molecule type" value="Genomic_DNA"/>
</dbReference>
<dbReference type="EMBL" id="X98812">
    <property type="protein sequence ID" value="CAA61252.1"/>
    <property type="status" value="JOINED"/>
    <property type="molecule type" value="Genomic_DNA"/>
</dbReference>
<dbReference type="EMBL" id="X98813">
    <property type="protein sequence ID" value="CAA61252.1"/>
    <property type="status" value="JOINED"/>
    <property type="molecule type" value="Genomic_DNA"/>
</dbReference>
<dbReference type="EMBL" id="X98814">
    <property type="protein sequence ID" value="CAA61252.1"/>
    <property type="status" value="JOINED"/>
    <property type="molecule type" value="Genomic_DNA"/>
</dbReference>
<dbReference type="EMBL" id="X98815">
    <property type="protein sequence ID" value="CAA61252.1"/>
    <property type="status" value="JOINED"/>
    <property type="molecule type" value="Genomic_DNA"/>
</dbReference>
<dbReference type="EMBL" id="X98816">
    <property type="protein sequence ID" value="CAA61252.1"/>
    <property type="status" value="JOINED"/>
    <property type="molecule type" value="Genomic_DNA"/>
</dbReference>
<dbReference type="EMBL" id="X98817">
    <property type="protein sequence ID" value="CAA61252.1"/>
    <property type="status" value="JOINED"/>
    <property type="molecule type" value="Genomic_DNA"/>
</dbReference>
<dbReference type="EMBL" id="X98818">
    <property type="protein sequence ID" value="CAA61252.1"/>
    <property type="status" value="JOINED"/>
    <property type="molecule type" value="Genomic_DNA"/>
</dbReference>
<dbReference type="EMBL" id="X98819">
    <property type="protein sequence ID" value="CAA61252.1"/>
    <property type="status" value="JOINED"/>
    <property type="molecule type" value="Genomic_DNA"/>
</dbReference>
<dbReference type="EMBL" id="X98820">
    <property type="protein sequence ID" value="CAA61252.1"/>
    <property type="status" value="JOINED"/>
    <property type="molecule type" value="Genomic_DNA"/>
</dbReference>
<dbReference type="EMBL" id="X98821">
    <property type="protein sequence ID" value="CAA61252.1"/>
    <property type="status" value="JOINED"/>
    <property type="molecule type" value="Genomic_DNA"/>
</dbReference>
<dbReference type="EMBL" id="X98822">
    <property type="protein sequence ID" value="CAA61252.1"/>
    <property type="status" value="JOINED"/>
    <property type="molecule type" value="Genomic_DNA"/>
</dbReference>
<dbReference type="EMBL" id="X98823">
    <property type="protein sequence ID" value="CAA61252.1"/>
    <property type="status" value="JOINED"/>
    <property type="molecule type" value="Genomic_DNA"/>
</dbReference>
<dbReference type="EMBL" id="AF042836">
    <property type="protein sequence ID" value="AAC64684.1"/>
    <property type="molecule type" value="Genomic_DNA"/>
</dbReference>
<dbReference type="EMBL" id="AF042836">
    <property type="protein sequence ID" value="AAC64683.1"/>
    <property type="molecule type" value="Genomic_DNA"/>
</dbReference>
<dbReference type="EMBL" id="BT007154">
    <property type="protein sequence ID" value="AAP35818.1"/>
    <property type="molecule type" value="mRNA"/>
</dbReference>
<dbReference type="EMBL" id="AK313691">
    <property type="protein sequence ID" value="BAG36440.1"/>
    <property type="molecule type" value="mRNA"/>
</dbReference>
<dbReference type="EMBL" id="AP001630">
    <property type="status" value="NOT_ANNOTATED_CDS"/>
    <property type="molecule type" value="Genomic_DNA"/>
</dbReference>
<dbReference type="EMBL" id="CH471079">
    <property type="protein sequence ID" value="EAX09508.1"/>
    <property type="molecule type" value="Genomic_DNA"/>
</dbReference>
<dbReference type="EMBL" id="CH471079">
    <property type="protein sequence ID" value="EAX09509.1"/>
    <property type="molecule type" value="Genomic_DNA"/>
</dbReference>
<dbReference type="EMBL" id="CH471079">
    <property type="protein sequence ID" value="EAX09510.1"/>
    <property type="molecule type" value="Genomic_DNA"/>
</dbReference>
<dbReference type="EMBL" id="CH471079">
    <property type="protein sequence ID" value="EAX09511.1"/>
    <property type="molecule type" value="Genomic_DNA"/>
</dbReference>
<dbReference type="EMBL" id="CH471079">
    <property type="protein sequence ID" value="EAX09515.1"/>
    <property type="molecule type" value="Genomic_DNA"/>
</dbReference>
<dbReference type="EMBL" id="BC000440">
    <property type="protein sequence ID" value="AAH00440.1"/>
    <property type="molecule type" value="mRNA"/>
</dbReference>
<dbReference type="EMBL" id="BC007257">
    <property type="protein sequence ID" value="AAH07257.1"/>
    <property type="molecule type" value="mRNA"/>
</dbReference>
<dbReference type="EMBL" id="BC010242">
    <property type="protein sequence ID" value="AAH10242.1"/>
    <property type="molecule type" value="mRNA"/>
</dbReference>
<dbReference type="EMBL" id="BC011381">
    <property type="protein sequence ID" value="AAH11381.1"/>
    <property type="molecule type" value="mRNA"/>
</dbReference>
<dbReference type="CCDS" id="CCDS13693.1">
    <molecule id="P35520-1"/>
</dbReference>
<dbReference type="PIR" id="A55760">
    <property type="entry name" value="A55760"/>
</dbReference>
<dbReference type="RefSeq" id="NP_000062.1">
    <molecule id="P35520-1"/>
    <property type="nucleotide sequence ID" value="NM_000071.3"/>
</dbReference>
<dbReference type="RefSeq" id="NP_001171479.1">
    <molecule id="P35520-1"/>
    <property type="nucleotide sequence ID" value="NM_001178008.3"/>
</dbReference>
<dbReference type="RefSeq" id="NP_001171480.1">
    <molecule id="P35520-1"/>
    <property type="nucleotide sequence ID" value="NM_001178009.3"/>
</dbReference>
<dbReference type="RefSeq" id="NP_001307227.1">
    <molecule id="P35520-1"/>
    <property type="nucleotide sequence ID" value="NM_001320298.2"/>
</dbReference>
<dbReference type="RefSeq" id="NP_001308002.1">
    <molecule id="P35520-1"/>
    <property type="nucleotide sequence ID" value="NM_001321073.1"/>
</dbReference>
<dbReference type="RefSeq" id="XP_011528079.1">
    <molecule id="P35520-2"/>
    <property type="nucleotide sequence ID" value="XM_011529777.2"/>
</dbReference>
<dbReference type="RefSeq" id="XP_011528083.1">
    <property type="nucleotide sequence ID" value="XM_011529781.1"/>
</dbReference>
<dbReference type="RefSeq" id="XP_011528084.1">
    <property type="nucleotide sequence ID" value="XM_011529782.1"/>
</dbReference>
<dbReference type="RefSeq" id="XP_011544396.1">
    <property type="nucleotide sequence ID" value="XM_011546094.1"/>
</dbReference>
<dbReference type="RefSeq" id="XP_011544397.1">
    <property type="nucleotide sequence ID" value="XM_011546095.2"/>
</dbReference>
<dbReference type="RefSeq" id="XP_011544399.1">
    <property type="nucleotide sequence ID" value="XM_011546097.2"/>
</dbReference>
<dbReference type="RefSeq" id="XP_011544400.1">
    <property type="nucleotide sequence ID" value="XM_011546098.1"/>
</dbReference>
<dbReference type="RefSeq" id="XP_011544401.1">
    <property type="nucleotide sequence ID" value="XM_011546099.1"/>
</dbReference>
<dbReference type="RefSeq" id="XP_016883700.1">
    <property type="nucleotide sequence ID" value="XM_017028211.1"/>
</dbReference>
<dbReference type="RefSeq" id="XP_016883701.1">
    <property type="nucleotide sequence ID" value="XM_017028212.1"/>
</dbReference>
<dbReference type="RefSeq" id="XP_016883702.1">
    <property type="nucleotide sequence ID" value="XM_017028213.1"/>
</dbReference>
<dbReference type="RefSeq" id="XP_016883703.1">
    <property type="nucleotide sequence ID" value="XM_017028214.1"/>
</dbReference>
<dbReference type="RefSeq" id="XP_016883704.1">
    <property type="nucleotide sequence ID" value="XM_017028215.1"/>
</dbReference>
<dbReference type="RefSeq" id="XP_016883705.1">
    <property type="nucleotide sequence ID" value="XM_017028216.1"/>
</dbReference>
<dbReference type="RefSeq" id="XP_016883706.1">
    <property type="nucleotide sequence ID" value="XM_017028217.1"/>
</dbReference>
<dbReference type="RefSeq" id="XP_016883707.1">
    <property type="nucleotide sequence ID" value="XM_017028218.1"/>
</dbReference>
<dbReference type="RefSeq" id="XP_016883978.1">
    <property type="nucleotide sequence ID" value="XM_017028489.1"/>
</dbReference>
<dbReference type="RefSeq" id="XP_016883979.1">
    <property type="nucleotide sequence ID" value="XM_017028490.1"/>
</dbReference>
<dbReference type="RefSeq" id="XP_016883980.1">
    <molecule id="P35520-1"/>
    <property type="nucleotide sequence ID" value="XM_017028491.3"/>
</dbReference>
<dbReference type="RefSeq" id="XP_016883981.1">
    <property type="nucleotide sequence ID" value="XM_017028492.1"/>
</dbReference>
<dbReference type="RefSeq" id="XP_047296976.1">
    <molecule id="P35520-2"/>
    <property type="nucleotide sequence ID" value="XM_047441020.1"/>
</dbReference>
<dbReference type="RefSeq" id="XP_047296977.1">
    <molecule id="P35520-2"/>
    <property type="nucleotide sequence ID" value="XM_047441021.1"/>
</dbReference>
<dbReference type="RefSeq" id="XP_047296978.1">
    <molecule id="P35520-2"/>
    <property type="nucleotide sequence ID" value="XM_047441022.1"/>
</dbReference>
<dbReference type="RefSeq" id="XP_047296979.1">
    <molecule id="P35520-2"/>
    <property type="nucleotide sequence ID" value="XM_047441023.1"/>
</dbReference>
<dbReference type="RefSeq" id="XP_047296980.1">
    <molecule id="P35520-2"/>
    <property type="nucleotide sequence ID" value="XM_047441024.1"/>
</dbReference>
<dbReference type="RefSeq" id="XP_047296981.1">
    <molecule id="P35520-2"/>
    <property type="nucleotide sequence ID" value="XM_047441025.1"/>
</dbReference>
<dbReference type="RefSeq" id="XP_047296982.1">
    <molecule id="P35520-1"/>
    <property type="nucleotide sequence ID" value="XM_047441026.1"/>
</dbReference>
<dbReference type="RefSeq" id="XP_047296983.1">
    <molecule id="P35520-1"/>
    <property type="nucleotide sequence ID" value="XM_047441027.1"/>
</dbReference>
<dbReference type="RefSeq" id="XP_047296984.1">
    <molecule id="P35520-1"/>
    <property type="nucleotide sequence ID" value="XM_047441028.1"/>
</dbReference>
<dbReference type="RefSeq" id="XP_047296985.1">
    <molecule id="P35520-1"/>
    <property type="nucleotide sequence ID" value="XM_047441029.1"/>
</dbReference>
<dbReference type="RefSeq" id="XP_047296986.1">
    <molecule id="P35520-1"/>
    <property type="nucleotide sequence ID" value="XM_047441030.1"/>
</dbReference>
<dbReference type="RefSeq" id="XP_047296987.1">
    <molecule id="P35520-1"/>
    <property type="nucleotide sequence ID" value="XM_047441031.1"/>
</dbReference>
<dbReference type="RefSeq" id="XP_054180889.1">
    <molecule id="P35520-2"/>
    <property type="nucleotide sequence ID" value="XM_054324914.1"/>
</dbReference>
<dbReference type="RefSeq" id="XP_054180890.1">
    <molecule id="P35520-2"/>
    <property type="nucleotide sequence ID" value="XM_054324915.1"/>
</dbReference>
<dbReference type="RefSeq" id="XP_054180891.1">
    <molecule id="P35520-2"/>
    <property type="nucleotide sequence ID" value="XM_054324916.1"/>
</dbReference>
<dbReference type="RefSeq" id="XP_054180892.1">
    <molecule id="P35520-2"/>
    <property type="nucleotide sequence ID" value="XM_054324917.1"/>
</dbReference>
<dbReference type="RefSeq" id="XP_054180893.1">
    <molecule id="P35520-2"/>
    <property type="nucleotide sequence ID" value="XM_054324918.1"/>
</dbReference>
<dbReference type="RefSeq" id="XP_054180894.1">
    <molecule id="P35520-2"/>
    <property type="nucleotide sequence ID" value="XM_054324919.1"/>
</dbReference>
<dbReference type="RefSeq" id="XP_054180895.1">
    <molecule id="P35520-2"/>
    <property type="nucleotide sequence ID" value="XM_054324920.1"/>
</dbReference>
<dbReference type="RefSeq" id="XP_054180896.1">
    <molecule id="P35520-1"/>
    <property type="nucleotide sequence ID" value="XM_054324921.1"/>
</dbReference>
<dbReference type="RefSeq" id="XP_054180897.1">
    <molecule id="P35520-1"/>
    <property type="nucleotide sequence ID" value="XM_054324922.1"/>
</dbReference>
<dbReference type="RefSeq" id="XP_054180898.1">
    <molecule id="P35520-1"/>
    <property type="nucleotide sequence ID" value="XM_054324923.1"/>
</dbReference>
<dbReference type="RefSeq" id="XP_054180899.1">
    <molecule id="P35520-1"/>
    <property type="nucleotide sequence ID" value="XM_054324924.1"/>
</dbReference>
<dbReference type="RefSeq" id="XP_054180900.1">
    <molecule id="P35520-1"/>
    <property type="nucleotide sequence ID" value="XM_054324925.1"/>
</dbReference>
<dbReference type="RefSeq" id="XP_054180901.1">
    <molecule id="P35520-1"/>
    <property type="nucleotide sequence ID" value="XM_054324926.1"/>
</dbReference>
<dbReference type="PDB" id="1JBQ">
    <property type="method" value="X-ray"/>
    <property type="resolution" value="2.60 A"/>
    <property type="chains" value="A/B/C/D/E/F=2-413"/>
</dbReference>
<dbReference type="PDB" id="1M54">
    <property type="method" value="X-ray"/>
    <property type="resolution" value="2.90 A"/>
    <property type="chains" value="A/B/C/D/E/F=44-406"/>
</dbReference>
<dbReference type="PDB" id="4COO">
    <property type="method" value="X-ray"/>
    <property type="resolution" value="2.00 A"/>
    <property type="chains" value="A/B=1-551"/>
</dbReference>
<dbReference type="PDB" id="4L0D">
    <property type="method" value="X-ray"/>
    <property type="resolution" value="2.97 A"/>
    <property type="chains" value="A/B=1-551"/>
</dbReference>
<dbReference type="PDB" id="4L27">
    <property type="method" value="X-ray"/>
    <property type="resolution" value="3.39 A"/>
    <property type="chains" value="A/B/C/D=2-551"/>
</dbReference>
<dbReference type="PDB" id="4L28">
    <property type="method" value="X-ray"/>
    <property type="resolution" value="2.63 A"/>
    <property type="chains" value="A/B/C/D=2-551"/>
</dbReference>
<dbReference type="PDB" id="4L3V">
    <property type="method" value="X-ray"/>
    <property type="resolution" value="3.63 A"/>
    <property type="chains" value="A/B/C=2-551"/>
</dbReference>
<dbReference type="PDB" id="4PCU">
    <property type="method" value="X-ray"/>
    <property type="resolution" value="3.58 A"/>
    <property type="chains" value="A/B=1-551"/>
</dbReference>
<dbReference type="PDB" id="4UUU">
    <property type="method" value="X-ray"/>
    <property type="resolution" value="1.71 A"/>
    <property type="chains" value="A/B=406-547"/>
</dbReference>
<dbReference type="PDB" id="5MMS">
    <property type="method" value="X-ray"/>
    <property type="resolution" value="2.80 A"/>
    <property type="chains" value="A/B/C/D/E/F=1-408"/>
</dbReference>
<dbReference type="PDB" id="7QGT">
    <property type="method" value="X-ray"/>
    <property type="resolution" value="2.69 A"/>
    <property type="chains" value="A/B=1-551"/>
</dbReference>
<dbReference type="PDB" id="8S5H">
    <property type="method" value="EM"/>
    <property type="resolution" value="3.70 A"/>
    <property type="chains" value="A/B/C/D/E/F/G/H=1-551"/>
</dbReference>
<dbReference type="PDB" id="8S5I">
    <property type="method" value="EM"/>
    <property type="resolution" value="3.10 A"/>
    <property type="chains" value="A/B/C/D/E/F=1-551"/>
</dbReference>
<dbReference type="PDB" id="8S5J">
    <property type="method" value="EM"/>
    <property type="resolution" value="3.90 A"/>
    <property type="chains" value="A/B/C/D/E/F/G/H/I/J=1-551"/>
</dbReference>
<dbReference type="PDB" id="8S5K">
    <property type="method" value="EM"/>
    <property type="resolution" value="3.80 A"/>
    <property type="chains" value="A/B/C/D/E/F/G/H=1-551"/>
</dbReference>
<dbReference type="PDB" id="8S5L">
    <property type="method" value="EM"/>
    <property type="resolution" value="3.80 A"/>
    <property type="chains" value="A/B/C/D=1-551"/>
</dbReference>
<dbReference type="PDB" id="8S5M">
    <property type="method" value="EM"/>
    <property type="resolution" value="4.00 A"/>
    <property type="chains" value="A/B/C/D/E/F/G/H/I/J=1-551"/>
</dbReference>
<dbReference type="PDB" id="8STW">
    <property type="method" value="X-ray"/>
    <property type="resolution" value="2.40 A"/>
    <property type="chains" value="A/B/C/D/E/F=44-406"/>
</dbReference>
<dbReference type="PDBsum" id="1JBQ"/>
<dbReference type="PDBsum" id="1M54"/>
<dbReference type="PDBsum" id="4COO"/>
<dbReference type="PDBsum" id="4L0D"/>
<dbReference type="PDBsum" id="4L27"/>
<dbReference type="PDBsum" id="4L28"/>
<dbReference type="PDBsum" id="4L3V"/>
<dbReference type="PDBsum" id="4PCU"/>
<dbReference type="PDBsum" id="4UUU"/>
<dbReference type="PDBsum" id="5MMS"/>
<dbReference type="PDBsum" id="7QGT"/>
<dbReference type="PDBsum" id="8S5H"/>
<dbReference type="PDBsum" id="8S5I"/>
<dbReference type="PDBsum" id="8S5J"/>
<dbReference type="PDBsum" id="8S5K"/>
<dbReference type="PDBsum" id="8S5L"/>
<dbReference type="PDBsum" id="8S5M"/>
<dbReference type="PDBsum" id="8STW"/>
<dbReference type="EMDB" id="EMD-19735"/>
<dbReference type="EMDB" id="EMD-19736"/>
<dbReference type="EMDB" id="EMD-19737"/>
<dbReference type="EMDB" id="EMD-19738"/>
<dbReference type="EMDB" id="EMD-19739"/>
<dbReference type="EMDB" id="EMD-19740"/>
<dbReference type="EMDB" id="EMD-19741"/>
<dbReference type="EMDB" id="EMD-19742"/>
<dbReference type="SMR" id="P35520"/>
<dbReference type="BioGRID" id="107321">
    <property type="interactions" value="168"/>
</dbReference>
<dbReference type="BioGRID" id="3195666">
    <property type="interactions" value="12"/>
</dbReference>
<dbReference type="FunCoup" id="P35520">
    <property type="interactions" value="341"/>
</dbReference>
<dbReference type="IntAct" id="P35520">
    <property type="interactions" value="62"/>
</dbReference>
<dbReference type="MINT" id="P35520"/>
<dbReference type="BindingDB" id="P35520"/>
<dbReference type="ChEMBL" id="CHEMBL3399911"/>
<dbReference type="DrugBank" id="DB00118">
    <property type="generic name" value="Ademetionine"/>
</dbReference>
<dbReference type="DrugBank" id="DB02079">
    <property type="generic name" value="Aminooxyacetic acid"/>
</dbReference>
<dbReference type="DrugBank" id="DB00151">
    <property type="generic name" value="Cysteine"/>
</dbReference>
<dbReference type="DrugBank" id="DB18267">
    <property type="generic name" value="Ferroheme"/>
</dbReference>
<dbReference type="DrugBank" id="DB00114">
    <property type="generic name" value="Pyridoxal phosphate"/>
</dbReference>
<dbReference type="DrugBank" id="DB00133">
    <property type="generic name" value="Serine"/>
</dbReference>
<dbReference type="DrugCentral" id="P35520"/>
<dbReference type="GuidetoPHARMACOLOGY" id="1443"/>
<dbReference type="GlyCosmos" id="P35520">
    <property type="glycosylation" value="1 site, 1 glycan"/>
</dbReference>
<dbReference type="GlyGen" id="P35520">
    <property type="glycosylation" value="3 sites, 2 O-linked glycans (2 sites)"/>
</dbReference>
<dbReference type="iPTMnet" id="P35520"/>
<dbReference type="PhosphoSitePlus" id="P35520"/>
<dbReference type="SwissPalm" id="P35520"/>
<dbReference type="BioMuta" id="CBS"/>
<dbReference type="DMDM" id="543959"/>
<dbReference type="jPOST" id="P35520"/>
<dbReference type="MassIVE" id="P35520"/>
<dbReference type="PeptideAtlas" id="P35520"/>
<dbReference type="ProteomicsDB" id="55074">
    <molecule id="P35520-1"/>
</dbReference>
<dbReference type="ProteomicsDB" id="55075">
    <molecule id="P35520-2"/>
</dbReference>
<dbReference type="Pumba" id="P35520"/>
<dbReference type="Antibodypedia" id="768">
    <property type="antibodies" value="491 antibodies from 37 providers"/>
</dbReference>
<dbReference type="DNASU" id="875"/>
<dbReference type="Ensembl" id="ENST00000352178.9">
    <molecule id="P35520-1"/>
    <property type="protein sequence ID" value="ENSP00000344460.5"/>
    <property type="gene ID" value="ENSG00000160200.18"/>
</dbReference>
<dbReference type="Ensembl" id="ENST00000359624.7">
    <molecule id="P35520-1"/>
    <property type="protein sequence ID" value="ENSP00000352643.3"/>
    <property type="gene ID" value="ENSG00000160200.18"/>
</dbReference>
<dbReference type="Ensembl" id="ENST00000398158.5">
    <molecule id="P35520-1"/>
    <property type="protein sequence ID" value="ENSP00000381225.1"/>
    <property type="gene ID" value="ENSG00000160200.18"/>
</dbReference>
<dbReference type="Ensembl" id="ENST00000398165.8">
    <molecule id="P35520-1"/>
    <property type="protein sequence ID" value="ENSP00000381231.4"/>
    <property type="gene ID" value="ENSG00000160200.18"/>
</dbReference>
<dbReference type="GeneID" id="102724560"/>
<dbReference type="GeneID" id="875"/>
<dbReference type="KEGG" id="hsa:102724560"/>
<dbReference type="KEGG" id="hsa:875"/>
<dbReference type="MANE-Select" id="ENST00000398165.8">
    <property type="protein sequence ID" value="ENSP00000381231.4"/>
    <property type="RefSeq nucleotide sequence ID" value="NM_000071.3"/>
    <property type="RefSeq protein sequence ID" value="NP_000062.1"/>
</dbReference>
<dbReference type="UCSC" id="uc002zct.3">
    <molecule id="P35520-1"/>
    <property type="organism name" value="human"/>
</dbReference>
<dbReference type="AGR" id="HGNC:1550"/>
<dbReference type="CTD" id="875"/>
<dbReference type="DisGeNET" id="102724560"/>
<dbReference type="DisGeNET" id="875"/>
<dbReference type="GeneCards" id="CBS"/>
<dbReference type="GeneReviews" id="CBS"/>
<dbReference type="HGNC" id="HGNC:1550">
    <property type="gene designation" value="CBS"/>
</dbReference>
<dbReference type="HPA" id="ENSG00000160200">
    <property type="expression patterns" value="Group enriched (brain, liver, pancreas)"/>
</dbReference>
<dbReference type="MalaCards" id="CBS"/>
<dbReference type="MIM" id="236200">
    <property type="type" value="phenotype"/>
</dbReference>
<dbReference type="MIM" id="613381">
    <property type="type" value="gene"/>
</dbReference>
<dbReference type="neXtProt" id="NX_P35520"/>
<dbReference type="OpenTargets" id="ENSG00000160200"/>
<dbReference type="Orphanet" id="394">
    <property type="disease" value="Homocystinuria due to cystathionine beta-synthase deficiency"/>
</dbReference>
<dbReference type="PharmGKB" id="PA26123"/>
<dbReference type="VEuPathDB" id="HostDB:ENSG00000160200"/>
<dbReference type="GeneTree" id="ENSGT00510000047027"/>
<dbReference type="HOGENOM" id="CLU_021018_0_0_1"/>
<dbReference type="InParanoid" id="P35520"/>
<dbReference type="OMA" id="KFADDEW"/>
<dbReference type="OrthoDB" id="728at2759"/>
<dbReference type="PAN-GO" id="P35520">
    <property type="GO annotations" value="3 GO annotations based on evolutionary models"/>
</dbReference>
<dbReference type="PhylomeDB" id="P35520"/>
<dbReference type="TreeFam" id="TF300784"/>
<dbReference type="BioCyc" id="MetaCyc:HS08461-MONOMER"/>
<dbReference type="BRENDA" id="4.2.1.22">
    <property type="organism ID" value="2681"/>
</dbReference>
<dbReference type="PathwayCommons" id="P35520"/>
<dbReference type="Reactome" id="R-HSA-1614603">
    <property type="pathway name" value="Cysteine formation from homocysteine"/>
</dbReference>
<dbReference type="Reactome" id="R-HSA-2408508">
    <property type="pathway name" value="Metabolism of ingested SeMet, Sec, MeSec into H2Se"/>
</dbReference>
<dbReference type="SABIO-RK" id="P35520"/>
<dbReference type="SignaLink" id="P35520"/>
<dbReference type="SIGNOR" id="P35520"/>
<dbReference type="UniPathway" id="UPA00136">
    <property type="reaction ID" value="UER00201"/>
</dbReference>
<dbReference type="BioGRID-ORCS" id="102724560">
    <property type="hits" value="0 hits in 17 CRISPR screens"/>
</dbReference>
<dbReference type="BioGRID-ORCS" id="875">
    <property type="hits" value="11 hits in 1154 CRISPR screens"/>
</dbReference>
<dbReference type="ChiTaRS" id="CBS">
    <property type="organism name" value="human"/>
</dbReference>
<dbReference type="EvolutionaryTrace" id="P35520"/>
<dbReference type="GeneWiki" id="Cystathionine_beta_synthase"/>
<dbReference type="Pharos" id="P35520">
    <property type="development level" value="Tchem"/>
</dbReference>
<dbReference type="PRO" id="PR:P35520"/>
<dbReference type="Proteomes" id="UP000005640">
    <property type="component" value="Chromosome 21"/>
</dbReference>
<dbReference type="RNAct" id="P35520">
    <property type="molecule type" value="protein"/>
</dbReference>
<dbReference type="Bgee" id="ENSG00000160200">
    <property type="expression patterns" value="Expressed in right lobe of liver and 97 other cell types or tissues"/>
</dbReference>
<dbReference type="ExpressionAtlas" id="P35520">
    <property type="expression patterns" value="baseline and differential"/>
</dbReference>
<dbReference type="GO" id="GO:0005737">
    <property type="term" value="C:cytoplasm"/>
    <property type="evidence" value="ECO:0000314"/>
    <property type="project" value="UniProtKB"/>
</dbReference>
<dbReference type="GO" id="GO:0005829">
    <property type="term" value="C:cytosol"/>
    <property type="evidence" value="ECO:0007005"/>
    <property type="project" value="UniProtKB"/>
</dbReference>
<dbReference type="GO" id="GO:0005634">
    <property type="term" value="C:nucleus"/>
    <property type="evidence" value="ECO:0000314"/>
    <property type="project" value="UniProtKB"/>
</dbReference>
<dbReference type="GO" id="GO:0070025">
    <property type="term" value="F:carbon monoxide binding"/>
    <property type="evidence" value="ECO:0000314"/>
    <property type="project" value="BHF-UCL"/>
</dbReference>
<dbReference type="GO" id="GO:0004122">
    <property type="term" value="F:cystathionine beta-synthase activity"/>
    <property type="evidence" value="ECO:0000314"/>
    <property type="project" value="UniProtKB"/>
</dbReference>
<dbReference type="GO" id="GO:0019899">
    <property type="term" value="F:enzyme binding"/>
    <property type="evidence" value="ECO:0000353"/>
    <property type="project" value="UniProtKB"/>
</dbReference>
<dbReference type="GO" id="GO:0020037">
    <property type="term" value="F:heme binding"/>
    <property type="evidence" value="ECO:0000314"/>
    <property type="project" value="UniProtKB"/>
</dbReference>
<dbReference type="GO" id="GO:0042802">
    <property type="term" value="F:identical protein binding"/>
    <property type="evidence" value="ECO:0000353"/>
    <property type="project" value="IntAct"/>
</dbReference>
<dbReference type="GO" id="GO:0046872">
    <property type="term" value="F:metal ion binding"/>
    <property type="evidence" value="ECO:0007669"/>
    <property type="project" value="UniProtKB-KW"/>
</dbReference>
<dbReference type="GO" id="GO:0072341">
    <property type="term" value="F:modified amino acid binding"/>
    <property type="evidence" value="ECO:0000314"/>
    <property type="project" value="UniProtKB"/>
</dbReference>
<dbReference type="GO" id="GO:0070026">
    <property type="term" value="F:nitric oxide binding"/>
    <property type="evidence" value="ECO:0000314"/>
    <property type="project" value="BHF-UCL"/>
</dbReference>
<dbReference type="GO" id="GO:0050421">
    <property type="term" value="F:nitrite reductase (NO-forming) activity"/>
    <property type="evidence" value="ECO:0000314"/>
    <property type="project" value="BHF-UCL"/>
</dbReference>
<dbReference type="GO" id="GO:0019825">
    <property type="term" value="F:oxygen binding"/>
    <property type="evidence" value="ECO:0000314"/>
    <property type="project" value="BHF-UCL"/>
</dbReference>
<dbReference type="GO" id="GO:0042803">
    <property type="term" value="F:protein homodimerization activity"/>
    <property type="evidence" value="ECO:0000314"/>
    <property type="project" value="UniProtKB"/>
</dbReference>
<dbReference type="GO" id="GO:0030170">
    <property type="term" value="F:pyridoxal phosphate binding"/>
    <property type="evidence" value="ECO:0000314"/>
    <property type="project" value="UniProtKB"/>
</dbReference>
<dbReference type="GO" id="GO:1904047">
    <property type="term" value="F:S-adenosyl-L-methionine binding"/>
    <property type="evidence" value="ECO:0000314"/>
    <property type="project" value="BHF-UCL"/>
</dbReference>
<dbReference type="GO" id="GO:0031625">
    <property type="term" value="F:ubiquitin protein ligase binding"/>
    <property type="evidence" value="ECO:0000353"/>
    <property type="project" value="UniProtKB"/>
</dbReference>
<dbReference type="GO" id="GO:0097746">
    <property type="term" value="P:blood vessel diameter maintenance"/>
    <property type="evidence" value="ECO:0007669"/>
    <property type="project" value="Ensembl"/>
</dbReference>
<dbReference type="GO" id="GO:0001974">
    <property type="term" value="P:blood vessel remodeling"/>
    <property type="evidence" value="ECO:0007669"/>
    <property type="project" value="Ensembl"/>
</dbReference>
<dbReference type="GO" id="GO:0060351">
    <property type="term" value="P:cartilage development involved in endochondral bone morphogenesis"/>
    <property type="evidence" value="ECO:0007669"/>
    <property type="project" value="Ensembl"/>
</dbReference>
<dbReference type="GO" id="GO:0071456">
    <property type="term" value="P:cellular response to hypoxia"/>
    <property type="evidence" value="ECO:0007669"/>
    <property type="project" value="Ensembl"/>
</dbReference>
<dbReference type="GO" id="GO:0021587">
    <property type="term" value="P:cerebellum morphogenesis"/>
    <property type="evidence" value="ECO:0007669"/>
    <property type="project" value="Ensembl"/>
</dbReference>
<dbReference type="GO" id="GO:0019344">
    <property type="term" value="P:cysteine biosynthetic process"/>
    <property type="evidence" value="ECO:0000314"/>
    <property type="project" value="BHF-UCL"/>
</dbReference>
<dbReference type="GO" id="GO:0006535">
    <property type="term" value="P:cysteine biosynthetic process from serine"/>
    <property type="evidence" value="ECO:0000318"/>
    <property type="project" value="GO_Central"/>
</dbReference>
<dbReference type="GO" id="GO:0019343">
    <property type="term" value="P:cysteine biosynthetic process via cystathionine"/>
    <property type="evidence" value="ECO:0007669"/>
    <property type="project" value="InterPro"/>
</dbReference>
<dbReference type="GO" id="GO:0042262">
    <property type="term" value="P:DNA protection"/>
    <property type="evidence" value="ECO:0000315"/>
    <property type="project" value="BHF-UCL"/>
</dbReference>
<dbReference type="GO" id="GO:0001958">
    <property type="term" value="P:endochondral ossification"/>
    <property type="evidence" value="ECO:0007669"/>
    <property type="project" value="Ensembl"/>
</dbReference>
<dbReference type="GO" id="GO:0043418">
    <property type="term" value="P:homocysteine catabolic process"/>
    <property type="evidence" value="ECO:0000314"/>
    <property type="project" value="UniProtKB"/>
</dbReference>
<dbReference type="GO" id="GO:0050667">
    <property type="term" value="P:homocysteine metabolic process"/>
    <property type="evidence" value="ECO:0000314"/>
    <property type="project" value="UniProtKB"/>
</dbReference>
<dbReference type="GO" id="GO:0070814">
    <property type="term" value="P:hydrogen sulfide biosynthetic process"/>
    <property type="evidence" value="ECO:0000314"/>
    <property type="project" value="UniProtKB"/>
</dbReference>
<dbReference type="GO" id="GO:0019448">
    <property type="term" value="P:L-cysteine catabolic process"/>
    <property type="evidence" value="ECO:0000314"/>
    <property type="project" value="UniProtKB"/>
</dbReference>
<dbReference type="GO" id="GO:0006565">
    <property type="term" value="P:L-serine catabolic process"/>
    <property type="evidence" value="ECO:0000314"/>
    <property type="project" value="UniProtKB"/>
</dbReference>
<dbReference type="GO" id="GO:0006563">
    <property type="term" value="P:L-serine metabolic process"/>
    <property type="evidence" value="ECO:0000314"/>
    <property type="project" value="UniProtKB"/>
</dbReference>
<dbReference type="GO" id="GO:0060135">
    <property type="term" value="P:maternal process involved in female pregnancy"/>
    <property type="evidence" value="ECO:0007669"/>
    <property type="project" value="Ensembl"/>
</dbReference>
<dbReference type="GO" id="GO:0043066">
    <property type="term" value="P:negative regulation of apoptotic process"/>
    <property type="evidence" value="ECO:0007669"/>
    <property type="project" value="Ensembl"/>
</dbReference>
<dbReference type="GO" id="GO:0046328">
    <property type="term" value="P:regulation of JNK cascade"/>
    <property type="evidence" value="ECO:0007669"/>
    <property type="project" value="Ensembl"/>
</dbReference>
<dbReference type="GO" id="GO:0010749">
    <property type="term" value="P:regulation of nitric oxide mediated signal transduction"/>
    <property type="evidence" value="ECO:0007669"/>
    <property type="project" value="Ensembl"/>
</dbReference>
<dbReference type="GO" id="GO:0051593">
    <property type="term" value="P:response to folic acid"/>
    <property type="evidence" value="ECO:0007669"/>
    <property type="project" value="Ensembl"/>
</dbReference>
<dbReference type="GO" id="GO:0006801">
    <property type="term" value="P:superoxide metabolic process"/>
    <property type="evidence" value="ECO:0007669"/>
    <property type="project" value="Ensembl"/>
</dbReference>
<dbReference type="GO" id="GO:0019346">
    <property type="term" value="P:transsulfuration"/>
    <property type="evidence" value="ECO:0007669"/>
    <property type="project" value="Ensembl"/>
</dbReference>
<dbReference type="CDD" id="cd01561">
    <property type="entry name" value="CBS_like"/>
    <property type="match status" value="1"/>
</dbReference>
<dbReference type="CDD" id="cd04608">
    <property type="entry name" value="CBS_pair_CBS"/>
    <property type="match status" value="1"/>
</dbReference>
<dbReference type="DisProt" id="DP01976"/>
<dbReference type="FunFam" id="3.10.580.10:FF:000014">
    <property type="entry name" value="Cystathionine beta-synthase"/>
    <property type="match status" value="1"/>
</dbReference>
<dbReference type="FunFam" id="3.40.50.1100:FF:000003">
    <property type="entry name" value="Cystathionine beta-synthase"/>
    <property type="match status" value="1"/>
</dbReference>
<dbReference type="FunFam" id="3.40.50.1100:FF:000118">
    <property type="entry name" value="Related to CYS4-cystathionine beta-synthase"/>
    <property type="match status" value="1"/>
</dbReference>
<dbReference type="Gene3D" id="3.40.50.1100">
    <property type="match status" value="2"/>
</dbReference>
<dbReference type="Gene3D" id="3.10.580.10">
    <property type="entry name" value="CBS-domain"/>
    <property type="match status" value="1"/>
</dbReference>
<dbReference type="InterPro" id="IPR046353">
    <property type="entry name" value="CBS_C"/>
</dbReference>
<dbReference type="InterPro" id="IPR000644">
    <property type="entry name" value="CBS_dom"/>
</dbReference>
<dbReference type="InterPro" id="IPR046342">
    <property type="entry name" value="CBS_dom_sf"/>
</dbReference>
<dbReference type="InterPro" id="IPR050214">
    <property type="entry name" value="Cys_Synth/Cystath_Beta-Synth"/>
</dbReference>
<dbReference type="InterPro" id="IPR005857">
    <property type="entry name" value="Cysta_beta_synth"/>
</dbReference>
<dbReference type="InterPro" id="IPR001216">
    <property type="entry name" value="P-phosphate_BS"/>
</dbReference>
<dbReference type="InterPro" id="IPR001926">
    <property type="entry name" value="TrpB-like_PALP"/>
</dbReference>
<dbReference type="InterPro" id="IPR036052">
    <property type="entry name" value="TrpB-like_PALP_sf"/>
</dbReference>
<dbReference type="NCBIfam" id="TIGR01137">
    <property type="entry name" value="cysta_beta"/>
    <property type="match status" value="1"/>
</dbReference>
<dbReference type="PANTHER" id="PTHR10314">
    <property type="entry name" value="CYSTATHIONINE BETA-SYNTHASE"/>
    <property type="match status" value="1"/>
</dbReference>
<dbReference type="Pfam" id="PF00571">
    <property type="entry name" value="CBS"/>
    <property type="match status" value="1"/>
</dbReference>
<dbReference type="Pfam" id="PF00291">
    <property type="entry name" value="PALP"/>
    <property type="match status" value="1"/>
</dbReference>
<dbReference type="SMART" id="SM00116">
    <property type="entry name" value="CBS"/>
    <property type="match status" value="1"/>
</dbReference>
<dbReference type="SUPFAM" id="SSF54631">
    <property type="entry name" value="CBS-domain pair"/>
    <property type="match status" value="1"/>
</dbReference>
<dbReference type="SUPFAM" id="SSF53686">
    <property type="entry name" value="Tryptophan synthase beta subunit-like PLP-dependent enzymes"/>
    <property type="match status" value="1"/>
</dbReference>
<dbReference type="PROSITE" id="PS51371">
    <property type="entry name" value="CBS"/>
    <property type="match status" value="1"/>
</dbReference>
<dbReference type="PROSITE" id="PS00901">
    <property type="entry name" value="CYS_SYNTHASE"/>
    <property type="match status" value="1"/>
</dbReference>
<comment type="function">
    <text evidence="1 24 28 29">Hydro-lyase catalyzing the first step of the transsulfuration pathway, where the hydroxyl group of L-serine is displaced by L-homocysteine in a beta-replacement reaction to form L-cystathionine, the precursor of L-cysteine. This catabolic route allows the elimination of L-methionine and the toxic metabolite L-homocysteine (PubMed:20506325, PubMed:23974653, PubMed:23981774). Also involved in the production of hydrogen sulfide, a gasotransmitter with signaling and cytoprotective effects on neurons (By similarity).</text>
</comment>
<comment type="catalytic activity">
    <reaction evidence="24 28 29 30">
        <text>L-homocysteine + L-serine = L,L-cystathionine + H2O</text>
        <dbReference type="Rhea" id="RHEA:10112"/>
        <dbReference type="ChEBI" id="CHEBI:15377"/>
        <dbReference type="ChEBI" id="CHEBI:33384"/>
        <dbReference type="ChEBI" id="CHEBI:58161"/>
        <dbReference type="ChEBI" id="CHEBI:58199"/>
        <dbReference type="EC" id="4.2.1.22"/>
    </reaction>
</comment>
<comment type="cofactor">
    <cofactor evidence="29">
        <name>pyridoxal 5'-phosphate</name>
        <dbReference type="ChEBI" id="CHEBI:597326"/>
    </cofactor>
</comment>
<comment type="activity regulation">
    <text evidence="9 13 24 27 28">Allosterically activated by S-adenosyl-methionine/AdoMet. Activated by S-adenosylhomocysteine/AdoHcy (PubMed:20506325). Binds non-covalently to a heme group that may control the redox sensitivity of the enzyme (PubMed:11483494, PubMed:12173932, PubMed:22738154).</text>
</comment>
<comment type="pathway">
    <text evidence="24 28 29">Amino-acid biosynthesis; L-cysteine biosynthesis; L-cysteine from L-homocysteine and L-serine: step 1/2.</text>
</comment>
<comment type="subunit">
    <text evidence="9 13 24 29">Homotetramer.</text>
</comment>
<comment type="interaction">
    <interactant intactId="EBI-740135">
        <id>P35520</id>
    </interactant>
    <interactant intactId="EBI-1383687">
        <id>Q9UQM7</id>
        <label>CAMK2A</label>
    </interactant>
    <organismsDiffer>false</organismsDiffer>
    <experiments>3</experiments>
</comment>
<comment type="interaction">
    <interactant intactId="EBI-740135">
        <id>P35520</id>
    </interactant>
    <interactant intactId="EBI-740135">
        <id>P35520</id>
        <label>CBS</label>
    </interactant>
    <organismsDiffer>false</organismsDiffer>
    <experiments>6</experiments>
</comment>
<comment type="interaction">
    <interactant intactId="EBI-740135">
        <id>P35520</id>
    </interactant>
    <interactant intactId="EBI-491549">
        <id>P35222</id>
        <label>CTNNB1</label>
    </interactant>
    <organismsDiffer>false</organismsDiffer>
    <experiments>3</experiments>
</comment>
<comment type="interaction">
    <interactant intactId="EBI-740135">
        <id>P35520</id>
    </interactant>
    <interactant intactId="EBI-997830">
        <id>Q15438</id>
        <label>CYTH1</label>
    </interactant>
    <organismsDiffer>false</organismsDiffer>
    <experiments>3</experiments>
</comment>
<comment type="interaction">
    <interactant intactId="EBI-740135">
        <id>P35520</id>
    </interactant>
    <interactant intactId="EBI-2339219">
        <id>Q08426</id>
        <label>EHHADH</label>
    </interactant>
    <organismsDiffer>false</organismsDiffer>
    <experiments>4</experiments>
</comment>
<comment type="interaction">
    <interactant intactId="EBI-740135">
        <id>P35520</id>
    </interactant>
    <interactant intactId="EBI-744771">
        <id>O75344</id>
        <label>FKBP6</label>
    </interactant>
    <organismsDiffer>false</organismsDiffer>
    <experiments>3</experiments>
</comment>
<comment type="interaction">
    <interactant intactId="EBI-740135">
        <id>P35520</id>
    </interactant>
    <interactant intactId="EBI-740459">
        <id>P51116</id>
        <label>FXR2</label>
    </interactant>
    <organismsDiffer>false</organismsDiffer>
    <experiments>3</experiments>
</comment>
<comment type="interaction">
    <interactant intactId="EBI-740135">
        <id>P35520</id>
    </interactant>
    <interactant intactId="EBI-515315">
        <id>P06241</id>
        <label>FYN</label>
    </interactant>
    <organismsDiffer>false</organismsDiffer>
    <experiments>3</experiments>
</comment>
<comment type="interaction">
    <interactant intactId="EBI-740135">
        <id>P35520</id>
    </interactant>
    <interactant intactId="EBI-6624768">
        <id>P22466</id>
        <label>GAL</label>
    </interactant>
    <organismsDiffer>false</organismsDiffer>
    <experiments>3</experiments>
</comment>
<comment type="interaction">
    <interactant intactId="EBI-740135">
        <id>P35520</id>
    </interactant>
    <interactant intactId="EBI-466029">
        <id>P42858</id>
        <label>HTT</label>
    </interactant>
    <organismsDiffer>false</organismsDiffer>
    <experiments>12</experiments>
</comment>
<comment type="interaction">
    <interactant intactId="EBI-740135">
        <id>P35520</id>
    </interactant>
    <interactant intactId="EBI-20795332">
        <id>Q92993-2</id>
        <label>KAT5</label>
    </interactant>
    <organismsDiffer>false</organismsDiffer>
    <experiments>3</experiments>
</comment>
<comment type="interaction">
    <interactant intactId="EBI-740135">
        <id>P35520</id>
    </interactant>
    <interactant intactId="EBI-348567">
        <id>O75928-2</id>
        <label>PIAS2</label>
    </interactant>
    <organismsDiffer>false</organismsDiffer>
    <experiments>3</experiments>
</comment>
<comment type="interaction">
    <interactant intactId="EBI-740135">
        <id>P35520</id>
    </interactant>
    <interactant intactId="EBI-714158">
        <id>Q13526</id>
        <label>PIN1</label>
    </interactant>
    <organismsDiffer>false</organismsDiffer>
    <experiments>4</experiments>
</comment>
<comment type="interaction">
    <interactant intactId="EBI-740135">
        <id>P35520</id>
    </interactant>
    <interactant intactId="EBI-476586">
        <id>P17612</id>
        <label>PRKACA</label>
    </interactant>
    <organismsDiffer>false</organismsDiffer>
    <experiments>3</experiments>
</comment>
<comment type="interaction">
    <interactant intactId="EBI-740135">
        <id>P35520</id>
    </interactant>
    <interactant intactId="EBI-1181439">
        <id>P54619</id>
        <label>PRKAG1</label>
    </interactant>
    <organismsDiffer>false</organismsDiffer>
    <experiments>3</experiments>
</comment>
<comment type="interaction">
    <interactant intactId="EBI-740135">
        <id>P35520</id>
    </interactant>
    <interactant intactId="EBI-359352">
        <id>P25786</id>
        <label>PSMA1</label>
    </interactant>
    <organismsDiffer>false</organismsDiffer>
    <experiments>4</experiments>
</comment>
<comment type="interaction">
    <interactant intactId="EBI-740135">
        <id>P35520</id>
    </interactant>
    <interactant intactId="EBI-2105393">
        <id>P57075</id>
        <label>UBASH3A</label>
    </interactant>
    <organismsDiffer>false</organismsDiffer>
    <experiments>4</experiments>
</comment>
<comment type="interaction">
    <interactant intactId="EBI-740135">
        <id>P35520</id>
    </interactant>
    <interactant intactId="EBI-10180829">
        <id>Q7KZS0</id>
        <label>UBE2I</label>
    </interactant>
    <organismsDiffer>false</organismsDiffer>
    <experiments>6</experiments>
</comment>
<comment type="interaction">
    <interactant intactId="EBI-740135">
        <id>P35520</id>
    </interactant>
    <interactant intactId="EBI-17634549">
        <id>Q9UJ78-2</id>
        <label>ZMYM5</label>
    </interactant>
    <organismsDiffer>false</organismsDiffer>
    <experiments>3</experiments>
</comment>
<comment type="subcellular location">
    <subcellularLocation>
        <location evidence="23 29">Cytoplasm</location>
    </subcellularLocation>
    <subcellularLocation>
        <location evidence="23">Nucleus</location>
    </subcellularLocation>
</comment>
<comment type="alternative products">
    <event type="alternative splicing"/>
    <isoform>
        <id>P35520-1</id>
        <name>1</name>
        <name>Major</name>
        <sequence type="displayed"/>
    </isoform>
    <isoform>
        <id>P35520-2</id>
        <name>2</name>
        <name>Minor</name>
        <sequence type="described" ref="VSP_001217"/>
    </isoform>
</comment>
<comment type="tissue specificity">
    <text>In the adult strongly expressed in liver and pancreas, some expression in heart and brain, weak expression in lung and kidney. In the fetus, expressed in brain, liver and kidney.</text>
</comment>
<comment type="disease" evidence="4 5 6 7 8 10 11 12 14 15 16 17 18 20 21 22 24 25 26 27 28 29 30 31 32 33 34 35 36 37 38 39 40 41 42 43 44 45 46 47">
    <disease id="DI-01464">
        <name>Cystathionine beta-synthase deficiency</name>
        <acronym>CBSD</acronym>
        <description>An enzymatic deficiency resulting in altered sulfur metabolism and homocystinuria. The clinical features of untreated homocystinuria due to CBS deficiency include myopia, ectopia lentis, intellectual disability, skeletal anomalies resembling Marfan syndrome, and thromboembolic events. Light skin and hair can also be present. Biochemical features include increased urinary homocystine and methionine.</description>
        <dbReference type="MIM" id="236200"/>
    </disease>
    <text>The disease is caused by variants affecting the gene represented in this entry.</text>
</comment>
<comment type="similarity">
    <text evidence="48">Belongs to the cysteine synthase/cystathionine beta-synthase family.</text>
</comment>
<comment type="online information" name="CBS mutation database">
    <link uri="https://databases.lovd.nl/shared/genes/CBS"/>
</comment>
<feature type="chain" id="PRO_0000167133" description="Cystathionine beta-synthase">
    <location>
        <begin position="1"/>
        <end position="551"/>
    </location>
</feature>
<feature type="domain" description="CBS" evidence="2">
    <location>
        <begin position="418"/>
        <end position="476"/>
    </location>
</feature>
<feature type="region of interest" description="Disordered" evidence="3">
    <location>
        <begin position="1"/>
        <end position="74"/>
    </location>
</feature>
<feature type="compositionally biased region" description="Basic and acidic residues" evidence="3">
    <location>
        <begin position="27"/>
        <end position="42"/>
    </location>
</feature>
<feature type="binding site" description="axial binding residue" evidence="9 13">
    <location>
        <position position="52"/>
    </location>
    <ligand>
        <name>heme</name>
        <dbReference type="ChEBI" id="CHEBI:30413"/>
    </ligand>
    <ligandPart>
        <name>Fe</name>
        <dbReference type="ChEBI" id="CHEBI:18248"/>
    </ligandPart>
</feature>
<feature type="binding site" description="axial binding residue" evidence="9 13">
    <location>
        <position position="65"/>
    </location>
    <ligand>
        <name>heme</name>
        <dbReference type="ChEBI" id="CHEBI:30413"/>
    </ligand>
    <ligandPart>
        <name>Fe</name>
        <dbReference type="ChEBI" id="CHEBI:18248"/>
    </ligandPart>
</feature>
<feature type="binding site" evidence="9 13">
    <location>
        <position position="149"/>
    </location>
    <ligand>
        <name>pyridoxal 5'-phosphate</name>
        <dbReference type="ChEBI" id="CHEBI:597326"/>
    </ligand>
</feature>
<feature type="binding site" evidence="9 13">
    <location>
        <begin position="256"/>
        <end position="260"/>
    </location>
    <ligand>
        <name>pyridoxal 5'-phosphate</name>
        <dbReference type="ChEBI" id="CHEBI:597326"/>
    </ligand>
</feature>
<feature type="binding site" evidence="9 13">
    <location>
        <position position="349"/>
    </location>
    <ligand>
        <name>pyridoxal 5'-phosphate</name>
        <dbReference type="ChEBI" id="CHEBI:597326"/>
    </ligand>
</feature>
<feature type="modified residue" description="Phosphoserine" evidence="49">
    <location>
        <position position="27"/>
    </location>
</feature>
<feature type="modified residue" description="N6-(pyridoxal phosphate)lysine" evidence="9 13">
    <location>
        <position position="119"/>
    </location>
</feature>
<feature type="modified residue" description="Phosphoserine" evidence="50">
    <location>
        <position position="199"/>
    </location>
</feature>
<feature type="cross-link" description="Glycyl lysine isopeptide (Lys-Gly) (interchain with G-Cter in SUMO)" evidence="23">
    <location>
        <position position="211"/>
    </location>
</feature>
<feature type="splice variant" id="VSP_001217" description="In isoform 2." evidence="48">
    <original>Y</original>
    <variation>SQDQAWAGVVGGPAD</variation>
    <location>
        <position position="518"/>
    </location>
</feature>
<feature type="sequence variant" id="VAR_046921" description="Results in 1/3 to 2/3 the enzyme activity of the wild-type; dbSNP:rs201827340." evidence="21">
    <original>R</original>
    <variation>C</variation>
    <location>
        <position position="18"/>
    </location>
</feature>
<feature type="sequence variant" id="VAR_008049" description="In CBSD; decreased expression; no effect on cystathionine beta-synthase activity; increased homotetramer formation; dbSNP:rs148865119." evidence="12 24 28">
    <original>P</original>
    <variation>L</variation>
    <location>
        <position position="49"/>
    </location>
</feature>
<feature type="sequence variant" id="VAR_008050" description="In CBSD; linked with V-114; 18% of activity; dbSNP:rs555959266." evidence="5">
    <original>R</original>
    <variation>W</variation>
    <location>
        <position position="58"/>
    </location>
</feature>
<feature type="sequence variant" id="VAR_021790" description="In CBSD; decreased cystathionine beta-synthase activity; inhibited by AdoMet and AdoHcy; decreased homotetramer formation; dbSNP:rs1191141364." evidence="8 24">
    <original>H</original>
    <variation>R</variation>
    <location>
        <position position="65"/>
    </location>
</feature>
<feature type="sequence variant" id="VAR_046922" description="In dbSNP:rs17849313." evidence="19">
    <original>A</original>
    <variation>P</variation>
    <location>
        <position position="69"/>
    </location>
</feature>
<feature type="sequence variant" id="VAR_002171" description="In CBSD; severe form; associated in cis with N-102; decreased cystathionine beta-synthase activity; decreased homotetramer formation; dbSNP:rs786204608." evidence="24 38">
    <original>P</original>
    <variation>R</variation>
    <location>
        <position position="78"/>
    </location>
</feature>
<feature type="sequence variant" id="VAR_008051" description="In CBSD; loss of cystathionine beta-synthase activity; dbSNP:rs863223435." evidence="11 29">
    <original>G</original>
    <variation>R</variation>
    <location>
        <position position="85"/>
    </location>
</feature>
<feature type="sequence variant" id="VAR_074590" description="In CBSD; decreased cystathionine beta-synthase activity; increased aggregation." evidence="29">
    <original>T</original>
    <variation>N</variation>
    <location>
        <position position="87"/>
    </location>
</feature>
<feature type="sequence variant" id="VAR_002172" description="In CBSD." evidence="35">
    <original>P</original>
    <variation>S</variation>
    <location>
        <position position="88"/>
    </location>
</feature>
<feature type="sequence variant" id="VAR_021791" description="In CBSD; common mutation in Irish population; loss of activity; dbSNP:rs786204757." evidence="12 16 47">
    <original>L</original>
    <variation>P</variation>
    <location>
        <position position="101"/>
    </location>
</feature>
<feature type="sequence variant" id="VAR_002173" description="In CBSD; associated in cis with R-78; decreased cystathionine beta-synthase activity; decreased homotetramer formation; dbSNP:rs786204609." evidence="24 38">
    <original>K</original>
    <variation>N</variation>
    <location>
        <position position="102"/>
    </location>
</feature>
<feature type="sequence variant" id="VAR_008052" description="In dbSNP:rs34040148." evidence="7">
    <original>K</original>
    <variation>Q</variation>
    <location>
        <position position="102"/>
    </location>
</feature>
<feature type="sequence variant" id="VAR_021792" description="In CBSD; loss of activity; dbSNP:rs778220779." evidence="12">
    <original>C</original>
    <variation>R</variation>
    <location>
        <position position="109"/>
    </location>
</feature>
<feature type="sequence variant" id="VAR_002174" description="In CBSD; mild form; when linked with W-58 severe form; decreased cystathionine beta-synthase activity; decreases homotetramer formation by promoting formation of larger aggregates; dbSNP:rs121964964." evidence="8 24 39">
    <original>A</original>
    <variation>V</variation>
    <location>
        <position position="114"/>
    </location>
</feature>
<feature type="sequence variant" id="VAR_008053" description="In CBSD; dbSNP:rs760214620." evidence="42">
    <original>G</original>
    <variation>R</variation>
    <location>
        <position position="116"/>
    </location>
</feature>
<feature type="sequence variant" id="VAR_008054" description="In CBSD; dbSNP:rs775992753.">
    <original>R</original>
    <variation>C</variation>
    <location>
        <position position="121"/>
    </location>
</feature>
<feature type="sequence variant" id="VAR_008055" description="In CBSD; dbSNP:rs770095972.">
    <original>R</original>
    <variation>H</variation>
    <location>
        <position position="121"/>
    </location>
</feature>
<feature type="sequence variant" id="VAR_008056" description="In CBSD; mild form; dbSNP:rs770095972.">
    <original>R</original>
    <variation>L</variation>
    <location>
        <position position="121"/>
    </location>
</feature>
<feature type="sequence variant" id="VAR_046923" description="In CBSD." evidence="10">
    <original>R</original>
    <variation>P</variation>
    <location>
        <position position="125"/>
    </location>
</feature>
<feature type="sequence variant" id="VAR_002175" description="In CBSD; severe form; when linked with D-131 moderate form; loss of cystathionine beta-synthase activity; decreased homotetramer formation; dbSNP:rs781444670." evidence="12 24 35 36">
    <original>R</original>
    <variation>Q</variation>
    <location>
        <position position="125"/>
    </location>
</feature>
<feature type="sequence variant" id="VAR_008057" description="In CBSD; exhibits an activity lower than 4% of the wild-type enzyme; absent capacity to form multimeric quaternary structure; dbSNP:rs886057100." evidence="14 22">
    <original>R</original>
    <variation>W</variation>
    <location>
        <position position="125"/>
    </location>
</feature>
<feature type="sequence variant" id="VAR_008058" description="In CBSD; loss of activity." evidence="5">
    <original>M</original>
    <variation>V</variation>
    <location>
        <position position="126"/>
    </location>
</feature>
<feature type="sequence variant" id="VAR_008059" description="In CBSD; dbSNP:rs374593242.">
    <original>E</original>
    <variation>D</variation>
    <location>
        <position position="128"/>
    </location>
</feature>
<feature type="sequence variant" id="VAR_002176" description="In CBSD; linked with Q-125; loss of activity; dbSNP:rs1555875351." evidence="36">
    <original>E</original>
    <variation>D</variation>
    <location>
        <position position="131"/>
    </location>
</feature>
<feature type="sequence variant" id="VAR_008060" description="In CBSD; mild form; dbSNP:rs121964965." evidence="33">
    <original>G</original>
    <variation>R</variation>
    <location>
        <position position="139"/>
    </location>
</feature>
<feature type="sequence variant" id="VAR_021793" description="In CBSD; 4% of activity; stable; dbSNP:rs370167302." evidence="17">
    <original>I</original>
    <variation>M</variation>
    <location>
        <position position="143"/>
    </location>
</feature>
<feature type="sequence variant" id="VAR_002177" description="In CBSD; loss of cystathionine beta-synthase activity; impaired stimulation by AdoMet and AdoHcy; decreased homotetramer formation; dbSNP:rs121964966." evidence="4 8 12 24 33 44">
    <original>E</original>
    <variation>K</variation>
    <location>
        <position position="144"/>
    </location>
</feature>
<feature type="sequence variant" id="VAR_002178" description="In CBSD; dbSNP:rs121964963." evidence="39">
    <original>P</original>
    <variation>L</variation>
    <location>
        <position position="145"/>
    </location>
</feature>
<feature type="sequence variant" id="VAR_008061" description="In CBSD; loss of cystathionine beta-synthase activity; impaired stimulation by AdoMet and AdoHcy; loss of homotetramer formation; dbSNP:rs755952006." evidence="17 22 24">
    <original>G</original>
    <variation>R</variation>
    <location>
        <position position="148"/>
    </location>
</feature>
<feature type="sequence variant" id="VAR_008063" description="In CBSD.">
    <location>
        <begin position="151"/>
        <end position="159"/>
    </location>
</feature>
<feature type="sequence variant" id="VAR_008062" description="In CBSD; dbSNP:rs373782713.">
    <original>G</original>
    <variation>R</variation>
    <location>
        <position position="151"/>
    </location>
</feature>
<feature type="sequence variant" id="VAR_008064" description="In CBSD; severe form.">
    <original>I</original>
    <variation>M</variation>
    <location>
        <position position="152"/>
    </location>
</feature>
<feature type="sequence variant" id="VAR_046924" description="In CBSD; protein expression is comparable to wild-type; significant decrease of enzyme activity." evidence="21">
    <original>L</original>
    <variation>Q</variation>
    <location>
        <position position="154"/>
    </location>
</feature>
<feature type="sequence variant" id="VAR_008065" description="In CBSD; complete loss of activity; severely affects homotetramer formation by promoting formation of larger aggregates; dbSNP:rs1429138569." evidence="8">
    <original>A</original>
    <variation>T</variation>
    <location>
        <position position="155"/>
    </location>
</feature>
<feature type="sequence variant" id="VAR_046925" description="In CBSD; protein expression is comparable to wild-type; significant decrease of enzyme activity." evidence="21">
    <original>A</original>
    <variation>V</variation>
    <location>
        <position position="155"/>
    </location>
</feature>
<feature type="sequence variant" id="VAR_002179" description="In CBSD; severe form; protein expression is comparable to wild-type; loss of cystathionine beta-synthase activity; no effect on homotetramer formation; dbSNP:rs1347651454." evidence="4 8 12 24 34">
    <original>C</original>
    <variation>Y</variation>
    <location>
        <position position="165"/>
    </location>
</feature>
<feature type="sequence variant" id="VAR_046926" description="In CBSD." evidence="20">
    <original>V</original>
    <variation>A</variation>
    <location>
        <position position="168"/>
    </location>
</feature>
<feature type="sequence variant" id="VAR_002180" description="In CBSD; dbSNP:rs121964970." evidence="40">
    <original>V</original>
    <variation>M</variation>
    <location>
        <position position="168"/>
    </location>
</feature>
<feature type="sequence variant" id="VAR_046927" description="In CBSD; presents 40% of the wild-type activity; highly reduced capacity to form multimeric quaternary structure." evidence="22">
    <original>M</original>
    <variation>V</variation>
    <location>
        <position position="173"/>
    </location>
</feature>
<feature type="sequence variant" id="VAR_066098" description="In CBSD; loss of activity." evidence="26">
    <location>
        <position position="173"/>
    </location>
</feature>
<feature type="sequence variant" id="VAR_008066" description="In CBSD; severe form; loss of cystathionine beta-synthase activity; inhibited by AdoMet; severely decreases homotetramer formation by promoting formation of larger aggregates; dbSNP:rs762065361." evidence="8 24 45">
    <original>E</original>
    <variation>K</variation>
    <location>
        <position position="176"/>
    </location>
</feature>
<feature type="sequence variant" id="VAR_008067" description="In CBSD; decreased cystathionine beta-synthase activity; decreases homotetramer formation; dbSNP:rs1555875010." evidence="24">
    <original>V</original>
    <variation>A</variation>
    <location>
        <position position="180"/>
    </location>
</feature>
<feature type="sequence variant" id="VAR_008068" description="In CBSD; moderate and severe forms; loss of cystathionine beta-synthase activity; absent capacity to form multimeric quaternary structure; dbSNP:rs121964973." evidence="14 20 22 24">
    <original>T</original>
    <variation>M</variation>
    <location>
        <position position="191"/>
    </location>
</feature>
<feature type="sequence variant" id="VAR_008069" description="In CBSD.">
    <original>D</original>
    <variation>V</variation>
    <location>
        <position position="198"/>
    </location>
</feature>
<feature type="sequence variant" id="VAR_066099" description="In CBSD; dbSNP:rs758712880." evidence="26">
    <original>P</original>
    <variation>L</variation>
    <location>
        <position position="200"/>
    </location>
</feature>
<feature type="sequence variant" id="VAR_002181" description="In CBSD; dbSNP:rs761647392." evidence="40">
    <original>R</original>
    <variation>H</variation>
    <location>
        <position position="224"/>
    </location>
</feature>
<feature type="sequence variant" id="VAR_008070" description="In CBSD; presents 20% of the wild-type activity; dramatically reduced capacity to form multimeric quaternary structure; dbSNP:rs763835246." evidence="16 22">
    <original>A</original>
    <variation>T</variation>
    <location>
        <position position="226"/>
    </location>
</feature>
<feature type="sequence variant" id="VAR_021794" description="In CBSD; loss of cystathionine beta-synthase activity; decreased homotetramer formation; dbSNP:rs1464223176." evidence="12 17 24 47">
    <original>N</original>
    <variation>K</variation>
    <location>
        <position position="228"/>
    </location>
</feature>
<feature type="sequence variant" id="VAR_046928" description="In CBSD; has significantly decreased levels of enzyme activity; dbSNP:rs1555874803." evidence="16">
    <original>N</original>
    <variation>S</variation>
    <location>
        <position position="228"/>
    </location>
</feature>
<feature type="sequence variant" id="VAR_046929" description="In CBSD; has significantly decreased levels of enzyme activity." evidence="16">
    <original>A</original>
    <variation>P</variation>
    <location>
        <position position="231"/>
    </location>
</feature>
<feature type="sequence variant" id="VAR_008071" description="In CBSD; decreased cystathionine beta-synthase activity; changed localization; decreased interaction with pyridoxal 5'-phosphate; no effect on homotetramer formation; dbSNP:rs773734233." evidence="29">
    <original>D</original>
    <variation>N</variation>
    <location>
        <position position="234"/>
    </location>
</feature>
<feature type="sequence variant" id="VAR_046930" description="In CBSD; protein expression is comparable to wild-type; significant decrease of enzyme activity." evidence="21">
    <location>
        <position position="234"/>
    </location>
</feature>
<feature type="sequence variant" id="VAR_002182" description="In CBSD.">
    <original>E</original>
    <variation>K</variation>
    <location>
        <position position="239"/>
    </location>
</feature>
<feature type="sequence variant" id="VAR_046931" description="In CBSD." evidence="18">
    <location>
        <begin position="247"/>
        <end position="256"/>
    </location>
</feature>
<feature type="sequence variant" id="VAR_002183" description="In CBSD; moderate to severe form; protein expression is comparable to wild-type; significant decrease of enzyme activity; dbSNP:rs758236584." evidence="21 35">
    <original>T</original>
    <variation>M</variation>
    <location>
        <position position="257"/>
    </location>
</feature>
<feature type="sequence variant" id="VAR_008072" description="In CBSD; moderate form; dbSNP:rs149119723." evidence="46 47">
    <original>T</original>
    <variation>M</variation>
    <location>
        <position position="262"/>
    </location>
</feature>
<feature type="sequence variant" id="VAR_021795" description="In CBSD; severe form; loss of cystathionine beta-synthase activity; loss of homotetramer formation." evidence="7 24">
    <original>T</original>
    <variation>R</variation>
    <location>
        <position position="262"/>
    </location>
</feature>
<feature type="sequence variant" id="VAR_008073" description="In CBSD.">
    <original>R</original>
    <variation>G</variation>
    <location>
        <position position="266"/>
    </location>
</feature>
<feature type="sequence variant" id="VAR_008074" description="In CBSD; mild form; decreased cystathionine beta-synthase activity; decreased homotetramer formation; no effect on heme-binding; decreased stability; dbSNP:rs121964969." evidence="24 27 46">
    <original>R</original>
    <variation>K</variation>
    <location>
        <position position="266"/>
    </location>
</feature>
<feature type="sequence variant" id="VAR_074591" description="In CBSD; loss of expression." evidence="28">
    <location>
        <position position="269"/>
    </location>
</feature>
<feature type="sequence variant" id="VAR_008075" description="In CBSD.">
    <location>
        <position position="270"/>
    </location>
</feature>
<feature type="sequence variant" id="VAR_021796" description="In CBSD; severe form; exhibits an activity lower than 4% of the wild-type enzyme; absent capacity to form multimeric quaternary structure." evidence="14 22">
    <original>C</original>
    <variation>Y</variation>
    <location>
        <position position="275"/>
    </location>
</feature>
<feature type="sequence variant" id="VAR_066100" description="In CBSD; loss of activity." evidence="26">
    <original>I</original>
    <variation>S</variation>
    <location>
        <position position="278"/>
    </location>
</feature>
<feature type="sequence variant" id="VAR_002184" description="In CBSD; mild to severe form; common mutation; decreased expression; loss of cystathionine beta-synthase activity; impaired stimulation by AdoMet and AdoHcy; severely affects homotetramer formation by promoting formation of larger aggregates; dbSNP:rs5742905." evidence="7 8 11 12 15 16 17 20 24 25 28 31 33 40 42 44 45 46 47">
    <original>I</original>
    <variation>T</variation>
    <location>
        <position position="278"/>
    </location>
</feature>
<feature type="sequence variant" id="VAR_066101" description="In CBSD; loss of activity." evidence="26">
    <original>D</original>
    <variation>N</variation>
    <location>
        <position position="281"/>
    </location>
</feature>
<feature type="sequence variant" id="VAR_046932" description="In CBSD." evidence="18">
    <original>A</original>
    <variation>P</variation>
    <location>
        <position position="288"/>
    </location>
</feature>
<feature type="sequence variant" id="VAR_046933" description="In CBSD; protein expression is comparable to wild-type; significant decrease of enzyme activity; dbSNP:rs141502207." evidence="21">
    <original>A</original>
    <variation>T</variation>
    <location>
        <position position="288"/>
    </location>
</feature>
<feature type="sequence variant" id="VAR_002185" description="In CBSD; dbSNP:rs760912339." evidence="32 42">
    <original>P</original>
    <variation>L</variation>
    <location>
        <position position="290"/>
    </location>
</feature>
<feature type="sequence variant" id="VAR_008076" description="In CBSD; no effect on cystathionine beta-synthase activity; inhibited by AdoHcy and impaired activation by AdoMet; no effect on homotetramer formation; dbSNP:rs779270933." evidence="5 12 24">
    <original>E</original>
    <variation>K</variation>
    <location>
        <position position="302"/>
    </location>
</feature>
<feature type="sequence variant" id="VAR_008077" description="In CBSD; loss of cystathionine beta-synthase activity; no effect on homotetramer formation." evidence="24">
    <original>G</original>
    <variation>R</variation>
    <location>
        <position position="305"/>
    </location>
</feature>
<feature type="sequence variant" id="VAR_002186" description="In CBSD; moderate to severe form; linked with D-534; common mutation; loss of cystathionine beta-synthase activity; impaired stimulation by AdoMet and AdoHcy; no effect on homotetramer formation; dbSNP:rs121964962." evidence="12 16 24 31 40 45 46 47">
    <original>G</original>
    <variation>S</variation>
    <location>
        <position position="307"/>
    </location>
</feature>
<feature type="sequence variant" id="VAR_008078" description="In CBSD; has 36% of wild-type enzyme activity; dbSNP:rs781567152." evidence="16 46">
    <original>V</original>
    <variation>A</variation>
    <location>
        <position position="320"/>
    </location>
</feature>
<feature type="sequence variant" id="VAR_066102" description="In CBSD; loss of activity." evidence="26">
    <original>D</original>
    <variation>V</variation>
    <location>
        <position position="321"/>
    </location>
</feature>
<feature type="sequence variant" id="VAR_008079" description="In CBSD; dbSNP:rs777919630." evidence="12 44">
    <original>A</original>
    <variation>E</variation>
    <location>
        <position position="331"/>
    </location>
</feature>
<feature type="sequence variant" id="VAR_002187" description="In CBSD; dbSNP:rs777919630." evidence="40">
    <original>A</original>
    <variation>V</variation>
    <location>
        <position position="331"/>
    </location>
</feature>
<feature type="sequence variant" id="VAR_002188" description="In CBSD; protein expression is comparable to wild-type; loss of activity; absent capacity to form multimeric quaternary structure; dbSNP:rs398123151." evidence="5 12 14 21 22 25">
    <original>R</original>
    <variation>C</variation>
    <location>
        <position position="336"/>
    </location>
</feature>
<feature type="sequence variant" id="VAR_008080" description="In CBSD; mild form; no effect on expression; exhibits an activity lower than 4% of the wild-type enzyme; altered stimulation by AdoMet; absent capacity to form multimeric quaternary structure; dbSNP:rs760417941." evidence="22 28">
    <original>R</original>
    <variation>H</variation>
    <location>
        <position position="336"/>
    </location>
</feature>
<feature type="sequence variant" id="VAR_021797" description="In CBSD; severe form; exhibits an activity lower than 4% of the wild-type enzyme; absent capacity to form multimeric quaternary structure." evidence="14 22">
    <original>L</original>
    <variation>P</variation>
    <location>
        <position position="338"/>
    </location>
</feature>
<feature type="sequence variant" id="VAR_021798" description="In CBSD; protein expression is comparable to wild-type; loss of activity; dbSNP:rs771298943." evidence="12 21">
    <original>G</original>
    <variation>S</variation>
    <location>
        <position position="347"/>
    </location>
</feature>
<feature type="sequence variant" id="VAR_021799" description="In CBSD; severe form; exhibits an activity lower than 4% of the wild-type enzyme; absent capacity to form multimeric quaternary structure." evidence="14 22">
    <original>S</original>
    <variation>N</variation>
    <location>
        <position position="349"/>
    </location>
</feature>
<feature type="sequence variant" id="VAR_008081" description="In CBSD.">
    <original>S</original>
    <variation>N</variation>
    <location>
        <position position="352"/>
    </location>
</feature>
<feature type="sequence variant" id="VAR_008082" description="In CBSD; protein expression is comparable to wild-type; significant decrease of enzyme activity; dbSNP:rs121964972." evidence="12 16 21 44">
    <original>T</original>
    <variation>M</variation>
    <location>
        <position position="353"/>
    </location>
</feature>
<feature type="sequence variant" id="VAR_008083" description="In CBSD; dbSNP:rs267606146.">
    <original>V</original>
    <variation>M</variation>
    <location>
        <position position="354"/>
    </location>
</feature>
<feature type="sequence variant" id="VAR_021800" description="In CBSD; dbSNP:rs1192581453." evidence="47">
    <original>A</original>
    <variation>P</variation>
    <location>
        <position position="355"/>
    </location>
</feature>
<feature type="sequence variant" id="VAR_046934" description="In CBSD; dbSNP:rs745764562." evidence="10">
    <original>A</original>
    <variation>T</variation>
    <location>
        <position position="361"/>
    </location>
</feature>
<feature type="sequence variant" id="VAR_008084" description="In CBSD; when linked with C-491 severe form; decreased cystathionine beta-synthase activity; decreased homotetramer formation; dbSNP:rs117687681." evidence="12 24 46">
    <original>R</original>
    <variation>C</variation>
    <location>
        <position position="369"/>
    </location>
</feature>
<feature type="sequence variant" id="VAR_002189" description="In CBSD; dbSNP:rs11700812.">
    <original>R</original>
    <variation>H</variation>
    <location>
        <position position="369"/>
    </location>
</feature>
<feature type="sequence variant" id="VAR_008085" description="In CBSD; dbSNP:rs757920190." evidence="6">
    <original>C</original>
    <variation>Y</variation>
    <location>
        <position position="370"/>
    </location>
</feature>
<feature type="sequence variant" id="VAR_002190" description="In CBSD; dbSNP:rs372010465." evidence="12 34">
    <original>V</original>
    <variation>M</variation>
    <location>
        <position position="371"/>
    </location>
</feature>
<feature type="sequence variant" id="VAR_046935" description="In CBSD; has significantly decreased levels of enzyme activity; dbSNP:rs1170128038." evidence="16">
    <original>D</original>
    <variation>N</variation>
    <location>
        <position position="376"/>
    </location>
</feature>
<feature type="sequence variant" id="VAR_021801" description="In CBSD; exhibits an activity lower than 4% of the wild-type enzyme; absent capacity to form multimeric quaternary structure; dbSNP:rs763036586." evidence="14 22">
    <original>R</original>
    <variation>Q</variation>
    <location>
        <position position="379"/>
    </location>
</feature>
<feature type="sequence variant" id="VAR_046936" description="In CBSD; dbSNP:rs769080151." evidence="18">
    <original>R</original>
    <variation>W</variation>
    <location>
        <position position="379"/>
    </location>
</feature>
<feature type="sequence variant" id="VAR_002191" description="In CBSD; severe form; dbSNP:rs121964967." evidence="43">
    <original>K</original>
    <variation>E</variation>
    <location>
        <position position="384"/>
    </location>
</feature>
<feature type="sequence variant" id="VAR_008086" description="In CBSD; moderate form.">
    <original>K</original>
    <variation>N</variation>
    <location>
        <position position="384"/>
    </location>
</feature>
<feature type="sequence variant" id="VAR_008087" description="In CBSD.">
    <original>M</original>
    <variation>I</variation>
    <location>
        <position position="391"/>
    </location>
</feature>
<feature type="sequence variant" id="VAR_021802" description="In CBSD; changed cystathionine beta-synthase activity; impaired stimulation by AdoMet; does not affect homotetramer formation; dbSNP:rs28934892." evidence="11 24">
    <original>P</original>
    <variation>L</variation>
    <location>
        <position position="422"/>
    </location>
</feature>
<feature type="sequence variant" id="VAR_074592" description="In CBSD; no effect on cystathionine beta-synthase activity; altered stimulation by AdoMet; dbSNP:rs863223434." evidence="28 30">
    <original>P</original>
    <variation>L</variation>
    <location>
        <position position="427"/>
    </location>
</feature>
<feature type="sequence variant" id="VAR_008088" description="In CBSD; dbSNP:rs1555872506.">
    <original>T</original>
    <variation>N</variation>
    <location>
        <position position="434"/>
    </location>
</feature>
<feature type="sequence variant" id="VAR_008089" description="In CBSD; no effect on cystathionine beta-synthase activity; impaired stimulation by AdoMet and AdoHcy; does not affect homotetramer formation." evidence="11 24">
    <original>I</original>
    <variation>T</variation>
    <location>
        <position position="435"/>
    </location>
</feature>
<feature type="sequence variant" id="VAR_008090" description="In CBSD; no effect on cystathionine beta-synthase activity; increased homotetramer formation; dbSNP:rs756467921." evidence="6 12 24 44">
    <original>R</original>
    <variation>Q</variation>
    <location>
        <position position="439"/>
    </location>
</feature>
<feature type="sequence variant" id="VAR_002192" description="In CBSD; decreased expression; no effect on cystathionine beta-synthase activity; altered stimulation by AdoMet; increased homotetramer formation; dbSNP:rs28934891." evidence="11 24 28 30 41">
    <original>D</original>
    <variation>N</variation>
    <location>
        <position position="444"/>
    </location>
</feature>
<feature type="sequence variant" id="VAR_066103" description="In CBSD." evidence="26">
    <original>A</original>
    <variation>S</variation>
    <location>
        <position position="446"/>
    </location>
</feature>
<feature type="sequence variant" id="VAR_074593" description="In CBSD; no effect on cystathionine beta-synthase activity; altered stimulation by AdoMet." evidence="30">
    <original>V</original>
    <variation>G</variation>
    <location>
        <position position="449"/>
    </location>
</feature>
<feature type="sequence variant" id="VAR_002193" description="In CBSD." evidence="40">
    <original>V</original>
    <variation>E</variation>
    <location>
        <position position="454"/>
    </location>
</feature>
<feature type="sequence variant" id="VAR_021803" description="In CBSD; severe; exhibits an activity lower than 4% of the wild-type enzyme; absent capacity to form multimeric quaternary structure." evidence="14 22">
    <original>L</original>
    <variation>P</variation>
    <location>
        <position position="456"/>
    </location>
</feature>
<feature type="sequence variant" id="VAR_008091" description="In CBSD; increased cystathionine beta-synthase activity; impaired stimulation by AdoMet and AdoHcy; decreased homotetramer formation; dbSNP:rs121964971." evidence="11 24">
    <original>S</original>
    <variation>L</variation>
    <location>
        <position position="466"/>
    </location>
</feature>
<feature type="sequence variant" id="VAR_008092" description="In CBSD; linked with C-369; dbSNP:rs1339830457.">
    <original>R</original>
    <variation>C</variation>
    <location>
        <position position="491"/>
    </location>
</feature>
<feature type="sequence variant" id="VAR_074594" description="In CBSD; no effect on cystathionine beta-synthase activity; altered stimulation by AdoMet; dbSNP:rs755106884." evidence="28 30">
    <original>S</original>
    <variation>L</variation>
    <location>
        <position position="500"/>
    </location>
</feature>
<feature type="sequence variant" id="VAR_046937" description="In CBSD; has significantly decreased levels of enzyme activity." evidence="16">
    <original>Q</original>
    <variation>K</variation>
    <location>
        <position position="526"/>
    </location>
</feature>
<feature type="sequence variant" id="VAR_008093" description="In CBSD; linked with S-307.">
    <original>V</original>
    <variation>D</variation>
    <location>
        <position position="534"/>
    </location>
</feature>
<feature type="sequence variant" id="VAR_002194" description="In CBSD; loss of cystathionine beta-synthase activity; impaired stimulation by AdoMet and AdoHcy; loss of homotetramer formation; dbSNP:rs121964968." evidence="24 43">
    <original>L</original>
    <variation>S</variation>
    <location>
        <position position="539"/>
    </location>
</feature>
<feature type="sequence variant" id="VAR_074595" description="In CBSD; no effect on cystathionine beta-synthase activity; altered stimulation by AdoMet." evidence="28 30">
    <original>L</original>
    <variation>Q</variation>
    <location>
        <position position="540"/>
    </location>
</feature>
<feature type="sequence variant" id="VAR_046938" description="Presents 60% of the wild-type activity; highly reduced capacity to form multimeric quaternary structure; dbSNP:rs150828989." evidence="22">
    <original>R</original>
    <variation>Q</variation>
    <location>
        <position position="548"/>
    </location>
</feature>
<feature type="mutagenesis site" description="Reduced heme content and cystathionine beta-synthase activity." evidence="13">
    <original>C</original>
    <variation>A</variation>
    <location>
        <position position="272"/>
    </location>
</feature>
<feature type="mutagenesis site" description="Reduced heme content and cystathionine beta-synthase activity." evidence="13">
    <original>C</original>
    <variation>S</variation>
    <location>
        <position position="275"/>
    </location>
</feature>
<feature type="sequence conflict" description="In Ref. 4; CAA61252." evidence="48" ref="4">
    <original>R</original>
    <variation>P</variation>
    <location>
        <position position="58"/>
    </location>
</feature>
<feature type="helix" evidence="52">
    <location>
        <begin position="60"/>
        <end position="62"/>
    </location>
</feature>
<feature type="strand" evidence="52">
    <location>
        <begin position="75"/>
        <end position="79"/>
    </location>
</feature>
<feature type="helix" evidence="52">
    <location>
        <begin position="80"/>
        <end position="82"/>
    </location>
</feature>
<feature type="strand" evidence="52">
    <location>
        <begin position="83"/>
        <end position="85"/>
    </location>
</feature>
<feature type="strand" evidence="52">
    <location>
        <begin position="89"/>
        <end position="91"/>
    </location>
</feature>
<feature type="helix" evidence="52">
    <location>
        <begin position="95"/>
        <end position="98"/>
    </location>
</feature>
<feature type="strand" evidence="52">
    <location>
        <begin position="103"/>
        <end position="109"/>
    </location>
</feature>
<feature type="helix" evidence="52">
    <location>
        <begin position="110"/>
        <end position="112"/>
    </location>
</feature>
<feature type="strand" evidence="53">
    <location>
        <begin position="113"/>
        <end position="117"/>
    </location>
</feature>
<feature type="helix" evidence="52">
    <location>
        <begin position="119"/>
        <end position="132"/>
    </location>
</feature>
<feature type="strand" evidence="52">
    <location>
        <begin position="141"/>
        <end position="145"/>
    </location>
</feature>
<feature type="helix" evidence="52">
    <location>
        <begin position="149"/>
        <end position="161"/>
    </location>
</feature>
<feature type="strand" evidence="52">
    <location>
        <begin position="164"/>
        <end position="170"/>
    </location>
</feature>
<feature type="helix" evidence="52">
    <location>
        <begin position="175"/>
        <end position="183"/>
    </location>
</feature>
<feature type="strand" evidence="52">
    <location>
        <begin position="187"/>
        <end position="191"/>
    </location>
</feature>
<feature type="strand" evidence="56">
    <location>
        <begin position="193"/>
        <end position="195"/>
    </location>
</feature>
<feature type="strand" evidence="57">
    <location>
        <begin position="199"/>
        <end position="202"/>
    </location>
</feature>
<feature type="helix" evidence="52">
    <location>
        <begin position="203"/>
        <end position="213"/>
    </location>
</feature>
<feature type="strand" evidence="54">
    <location>
        <begin position="217"/>
        <end position="219"/>
    </location>
</feature>
<feature type="turn" evidence="52">
    <location>
        <begin position="222"/>
        <end position="224"/>
    </location>
</feature>
<feature type="helix" evidence="52">
    <location>
        <begin position="227"/>
        <end position="234"/>
    </location>
</feature>
<feature type="helix" evidence="52">
    <location>
        <begin position="236"/>
        <end position="243"/>
    </location>
</feature>
<feature type="turn" evidence="52">
    <location>
        <begin position="244"/>
        <end position="246"/>
    </location>
</feature>
<feature type="strand" evidence="52">
    <location>
        <begin position="249"/>
        <end position="254"/>
    </location>
</feature>
<feature type="strand" evidence="52">
    <location>
        <begin position="256"/>
        <end position="258"/>
    </location>
</feature>
<feature type="helix" evidence="52">
    <location>
        <begin position="259"/>
        <end position="271"/>
    </location>
</feature>
<feature type="strand" evidence="51">
    <location>
        <begin position="272"/>
        <end position="274"/>
    </location>
</feature>
<feature type="strand" evidence="52">
    <location>
        <begin position="276"/>
        <end position="282"/>
    </location>
</feature>
<feature type="strand" evidence="52">
    <location>
        <begin position="288"/>
        <end position="290"/>
    </location>
</feature>
<feature type="helix" evidence="52">
    <location>
        <begin position="291"/>
        <end position="294"/>
    </location>
</feature>
<feature type="helix" evidence="52">
    <location>
        <begin position="317"/>
        <end position="319"/>
    </location>
</feature>
<feature type="strand" evidence="52">
    <location>
        <begin position="322"/>
        <end position="326"/>
    </location>
</feature>
<feature type="helix" evidence="52">
    <location>
        <begin position="328"/>
        <end position="342"/>
    </location>
</feature>
<feature type="helix" evidence="52">
    <location>
        <begin position="348"/>
        <end position="360"/>
    </location>
</feature>
<feature type="helix" evidence="52">
    <location>
        <begin position="361"/>
        <end position="363"/>
    </location>
</feature>
<feature type="strand" evidence="52">
    <location>
        <begin position="369"/>
        <end position="374"/>
    </location>
</feature>
<feature type="helix" evidence="52">
    <location>
        <begin position="378"/>
        <end position="381"/>
    </location>
</feature>
<feature type="turn" evidence="52">
    <location>
        <begin position="382"/>
        <end position="386"/>
    </location>
</feature>
<feature type="helix" evidence="52">
    <location>
        <begin position="388"/>
        <end position="393"/>
    </location>
</feature>
<feature type="helix" evidence="52">
    <location>
        <begin position="399"/>
        <end position="404"/>
    </location>
</feature>
<feature type="turn" evidence="55">
    <location>
        <begin position="408"/>
        <end position="411"/>
    </location>
</feature>
<feature type="helix" evidence="55">
    <location>
        <begin position="414"/>
        <end position="417"/>
    </location>
</feature>
<feature type="helix" evidence="55">
    <location>
        <begin position="431"/>
        <end position="441"/>
    </location>
</feature>
<feature type="strand" evidence="55">
    <location>
        <begin position="444"/>
        <end position="449"/>
    </location>
</feature>
<feature type="strand" evidence="55">
    <location>
        <begin position="455"/>
        <end position="460"/>
    </location>
</feature>
<feature type="helix" evidence="55">
    <location>
        <begin position="461"/>
        <end position="469"/>
    </location>
</feature>
<feature type="helix" evidence="55">
    <location>
        <begin position="479"/>
        <end position="482"/>
    </location>
</feature>
<feature type="strand" evidence="55">
    <location>
        <begin position="489"/>
        <end position="491"/>
    </location>
</feature>
<feature type="helix" evidence="55">
    <location>
        <begin position="496"/>
        <end position="505"/>
    </location>
</feature>
<feature type="strand" evidence="55">
    <location>
        <begin position="509"/>
        <end position="515"/>
    </location>
</feature>
<feature type="strand" evidence="55">
    <location>
        <begin position="526"/>
        <end position="534"/>
    </location>
</feature>
<feature type="helix" evidence="55">
    <location>
        <begin position="536"/>
        <end position="544"/>
    </location>
</feature>
<protein>
    <recommendedName>
        <fullName evidence="48">Cystathionine beta-synthase</fullName>
        <ecNumber evidence="24 28 29 30">4.2.1.22</ecNumber>
    </recommendedName>
    <alternativeName>
        <fullName>Beta-thionase</fullName>
    </alternativeName>
    <alternativeName>
        <fullName>Serine sulfhydrase</fullName>
    </alternativeName>
</protein>
<organism>
    <name type="scientific">Homo sapiens</name>
    <name type="common">Human</name>
    <dbReference type="NCBI Taxonomy" id="9606"/>
    <lineage>
        <taxon>Eukaryota</taxon>
        <taxon>Metazoa</taxon>
        <taxon>Chordata</taxon>
        <taxon>Craniata</taxon>
        <taxon>Vertebrata</taxon>
        <taxon>Euteleostomi</taxon>
        <taxon>Mammalia</taxon>
        <taxon>Eutheria</taxon>
        <taxon>Euarchontoglires</taxon>
        <taxon>Primates</taxon>
        <taxon>Haplorrhini</taxon>
        <taxon>Catarrhini</taxon>
        <taxon>Hominidae</taxon>
        <taxon>Homo</taxon>
    </lineage>
</organism>